<protein>
    <recommendedName>
        <fullName>Sodium/potassium-transporting ATPase subunit alpha-3</fullName>
        <shortName>Na(+)/K(+) ATPase alpha-3 subunit</shortName>
        <ecNumber>7.2.2.13</ecNumber>
    </recommendedName>
    <alternativeName>
        <fullName>Na(+)/K(+) ATPase alpha(III) subunit</fullName>
    </alternativeName>
    <alternativeName>
        <fullName>Sodium pump subunit alpha-3</fullName>
    </alternativeName>
</protein>
<evidence type="ECO:0000250" key="1"/>
<evidence type="ECO:0000250" key="2">
    <source>
        <dbReference type="UniProtKB" id="P06687"/>
    </source>
</evidence>
<evidence type="ECO:0000250" key="3">
    <source>
        <dbReference type="UniProtKB" id="Q6PIC6"/>
    </source>
</evidence>
<evidence type="ECO:0000255" key="4"/>
<evidence type="ECO:0000256" key="5">
    <source>
        <dbReference type="SAM" id="MobiDB-lite"/>
    </source>
</evidence>
<evidence type="ECO:0000269" key="6">
    <source>
    </source>
</evidence>
<evidence type="ECO:0000269" key="7">
    <source>
    </source>
</evidence>
<evidence type="ECO:0000269" key="8">
    <source>
    </source>
</evidence>
<evidence type="ECO:0000269" key="9">
    <source>
    </source>
</evidence>
<evidence type="ECO:0000269" key="10">
    <source>
    </source>
</evidence>
<evidence type="ECO:0000269" key="11">
    <source>
    </source>
</evidence>
<evidence type="ECO:0000269" key="12">
    <source>
    </source>
</evidence>
<evidence type="ECO:0000269" key="13">
    <source>
    </source>
</evidence>
<evidence type="ECO:0000269" key="14">
    <source>
    </source>
</evidence>
<evidence type="ECO:0000269" key="15">
    <source>
    </source>
</evidence>
<evidence type="ECO:0000269" key="16">
    <source>
    </source>
</evidence>
<evidence type="ECO:0000303" key="17">
    <source>
    </source>
</evidence>
<evidence type="ECO:0000305" key="18"/>
<evidence type="ECO:0007829" key="19">
    <source>
        <dbReference type="PDB" id="8D3V"/>
    </source>
</evidence>
<evidence type="ECO:0007829" key="20">
    <source>
        <dbReference type="PDB" id="8D3W"/>
    </source>
</evidence>
<proteinExistence type="evidence at protein level"/>
<reference key="1">
    <citation type="journal article" date="1988" name="FEBS Lett.">
        <title>Family of human Na+, K+-ATPase genes. Structure of the gene for the catalytic subunit (alpha III-form) and its relationship with structural features of the protein.</title>
        <authorList>
            <person name="Ovchinnikov Y.A."/>
            <person name="Monastyrskaya G.S."/>
            <person name="Broude N.E."/>
            <person name="Ushkaryov Y.A."/>
            <person name="Melkov A.M."/>
            <person name="Smirnov Y.V."/>
            <person name="Malyshev I.V."/>
            <person name="Allikmets R.L."/>
            <person name="Kostina M.B."/>
            <person name="Dulubova I.E."/>
            <person name="Kiyatkin N.I."/>
            <person name="Grishin A.V."/>
            <person name="Modyanov N.N."/>
            <person name="Sverdlov E.D."/>
        </authorList>
    </citation>
    <scope>NUCLEOTIDE SEQUENCE [GENOMIC DNA] (ISOFORM 1)</scope>
</reference>
<reference key="2">
    <citation type="journal article" date="1987" name="Dokl. Akad. Nauk SSSR">
        <title>Family of human Na(+),K(+)-ATPase genes. Structure of the gene of isoform alpha-III.</title>
        <authorList>
            <person name="Sverdlov E.D."/>
            <person name="Monastyrskaya G.S."/>
            <person name="Broude N.E."/>
            <person name="Ushkarev Y.A."/>
            <person name="Melkov A.M."/>
            <person name="Smirnov Y.V."/>
            <person name="Malyshev I.V."/>
            <person name="Allikmets R.L."/>
            <person name="Kostina M.B."/>
            <person name="Dulubova I.E."/>
            <person name="Kiyatkin N.I."/>
            <person name="Grishin A.V."/>
            <person name="Modyanov N.N."/>
            <person name="Ovchinnikov Y.A."/>
        </authorList>
    </citation>
    <scope>NUCLEOTIDE SEQUENCE [GENOMIC DNA] (ISOFORM 1)</scope>
    <source>
        <tissue>Brain</tissue>
    </source>
</reference>
<reference key="3">
    <citation type="journal article" date="2004" name="Nat. Genet.">
        <title>Complete sequencing and characterization of 21,243 full-length human cDNAs.</title>
        <authorList>
            <person name="Ota T."/>
            <person name="Suzuki Y."/>
            <person name="Nishikawa T."/>
            <person name="Otsuki T."/>
            <person name="Sugiyama T."/>
            <person name="Irie R."/>
            <person name="Wakamatsu A."/>
            <person name="Hayashi K."/>
            <person name="Sato H."/>
            <person name="Nagai K."/>
            <person name="Kimura K."/>
            <person name="Makita H."/>
            <person name="Sekine M."/>
            <person name="Obayashi M."/>
            <person name="Nishi T."/>
            <person name="Shibahara T."/>
            <person name="Tanaka T."/>
            <person name="Ishii S."/>
            <person name="Yamamoto J."/>
            <person name="Saito K."/>
            <person name="Kawai Y."/>
            <person name="Isono Y."/>
            <person name="Nakamura Y."/>
            <person name="Nagahari K."/>
            <person name="Murakami K."/>
            <person name="Yasuda T."/>
            <person name="Iwayanagi T."/>
            <person name="Wagatsuma M."/>
            <person name="Shiratori A."/>
            <person name="Sudo H."/>
            <person name="Hosoiri T."/>
            <person name="Kaku Y."/>
            <person name="Kodaira H."/>
            <person name="Kondo H."/>
            <person name="Sugawara M."/>
            <person name="Takahashi M."/>
            <person name="Kanda K."/>
            <person name="Yokoi T."/>
            <person name="Furuya T."/>
            <person name="Kikkawa E."/>
            <person name="Omura Y."/>
            <person name="Abe K."/>
            <person name="Kamihara K."/>
            <person name="Katsuta N."/>
            <person name="Sato K."/>
            <person name="Tanikawa M."/>
            <person name="Yamazaki M."/>
            <person name="Ninomiya K."/>
            <person name="Ishibashi T."/>
            <person name="Yamashita H."/>
            <person name="Murakawa K."/>
            <person name="Fujimori K."/>
            <person name="Tanai H."/>
            <person name="Kimata M."/>
            <person name="Watanabe M."/>
            <person name="Hiraoka S."/>
            <person name="Chiba Y."/>
            <person name="Ishida S."/>
            <person name="Ono Y."/>
            <person name="Takiguchi S."/>
            <person name="Watanabe S."/>
            <person name="Yosida M."/>
            <person name="Hotuta T."/>
            <person name="Kusano J."/>
            <person name="Kanehori K."/>
            <person name="Takahashi-Fujii A."/>
            <person name="Hara H."/>
            <person name="Tanase T.-O."/>
            <person name="Nomura Y."/>
            <person name="Togiya S."/>
            <person name="Komai F."/>
            <person name="Hara R."/>
            <person name="Takeuchi K."/>
            <person name="Arita M."/>
            <person name="Imose N."/>
            <person name="Musashino K."/>
            <person name="Yuuki H."/>
            <person name="Oshima A."/>
            <person name="Sasaki N."/>
            <person name="Aotsuka S."/>
            <person name="Yoshikawa Y."/>
            <person name="Matsunawa H."/>
            <person name="Ichihara T."/>
            <person name="Shiohata N."/>
            <person name="Sano S."/>
            <person name="Moriya S."/>
            <person name="Momiyama H."/>
            <person name="Satoh N."/>
            <person name="Takami S."/>
            <person name="Terashima Y."/>
            <person name="Suzuki O."/>
            <person name="Nakagawa S."/>
            <person name="Senoh A."/>
            <person name="Mizoguchi H."/>
            <person name="Goto Y."/>
            <person name="Shimizu F."/>
            <person name="Wakebe H."/>
            <person name="Hishigaki H."/>
            <person name="Watanabe T."/>
            <person name="Sugiyama A."/>
            <person name="Takemoto M."/>
            <person name="Kawakami B."/>
            <person name="Yamazaki M."/>
            <person name="Watanabe K."/>
            <person name="Kumagai A."/>
            <person name="Itakura S."/>
            <person name="Fukuzumi Y."/>
            <person name="Fujimori Y."/>
            <person name="Komiyama M."/>
            <person name="Tashiro H."/>
            <person name="Tanigami A."/>
            <person name="Fujiwara T."/>
            <person name="Ono T."/>
            <person name="Yamada K."/>
            <person name="Fujii Y."/>
            <person name="Ozaki K."/>
            <person name="Hirao M."/>
            <person name="Ohmori Y."/>
            <person name="Kawabata A."/>
            <person name="Hikiji T."/>
            <person name="Kobatake N."/>
            <person name="Inagaki H."/>
            <person name="Ikema Y."/>
            <person name="Okamoto S."/>
            <person name="Okitani R."/>
            <person name="Kawakami T."/>
            <person name="Noguchi S."/>
            <person name="Itoh T."/>
            <person name="Shigeta K."/>
            <person name="Senba T."/>
            <person name="Matsumura K."/>
            <person name="Nakajima Y."/>
            <person name="Mizuno T."/>
            <person name="Morinaga M."/>
            <person name="Sasaki M."/>
            <person name="Togashi T."/>
            <person name="Oyama M."/>
            <person name="Hata H."/>
            <person name="Watanabe M."/>
            <person name="Komatsu T."/>
            <person name="Mizushima-Sugano J."/>
            <person name="Satoh T."/>
            <person name="Shirai Y."/>
            <person name="Takahashi Y."/>
            <person name="Nakagawa K."/>
            <person name="Okumura K."/>
            <person name="Nagase T."/>
            <person name="Nomura N."/>
            <person name="Kikuchi H."/>
            <person name="Masuho Y."/>
            <person name="Yamashita R."/>
            <person name="Nakai K."/>
            <person name="Yada T."/>
            <person name="Nakamura Y."/>
            <person name="Ohara O."/>
            <person name="Isogai T."/>
            <person name="Sugano S."/>
        </authorList>
    </citation>
    <scope>NUCLEOTIDE SEQUENCE [LARGE SCALE MRNA] (ISOFORMS 2 AND 3)</scope>
    <source>
        <tissue>Brain</tissue>
        <tissue>Thalamus</tissue>
    </source>
</reference>
<reference key="4">
    <citation type="journal article" date="2004" name="Nature">
        <title>The DNA sequence and biology of human chromosome 19.</title>
        <authorList>
            <person name="Grimwood J."/>
            <person name="Gordon L.A."/>
            <person name="Olsen A.S."/>
            <person name="Terry A."/>
            <person name="Schmutz J."/>
            <person name="Lamerdin J.E."/>
            <person name="Hellsten U."/>
            <person name="Goodstein D."/>
            <person name="Couronne O."/>
            <person name="Tran-Gyamfi M."/>
            <person name="Aerts A."/>
            <person name="Altherr M."/>
            <person name="Ashworth L."/>
            <person name="Bajorek E."/>
            <person name="Black S."/>
            <person name="Branscomb E."/>
            <person name="Caenepeel S."/>
            <person name="Carrano A.V."/>
            <person name="Caoile C."/>
            <person name="Chan Y.M."/>
            <person name="Christensen M."/>
            <person name="Cleland C.A."/>
            <person name="Copeland A."/>
            <person name="Dalin E."/>
            <person name="Dehal P."/>
            <person name="Denys M."/>
            <person name="Detter J.C."/>
            <person name="Escobar J."/>
            <person name="Flowers D."/>
            <person name="Fotopulos D."/>
            <person name="Garcia C."/>
            <person name="Georgescu A.M."/>
            <person name="Glavina T."/>
            <person name="Gomez M."/>
            <person name="Gonzales E."/>
            <person name="Groza M."/>
            <person name="Hammon N."/>
            <person name="Hawkins T."/>
            <person name="Haydu L."/>
            <person name="Ho I."/>
            <person name="Huang W."/>
            <person name="Israni S."/>
            <person name="Jett J."/>
            <person name="Kadner K."/>
            <person name="Kimball H."/>
            <person name="Kobayashi A."/>
            <person name="Larionov V."/>
            <person name="Leem S.-H."/>
            <person name="Lopez F."/>
            <person name="Lou Y."/>
            <person name="Lowry S."/>
            <person name="Malfatti S."/>
            <person name="Martinez D."/>
            <person name="McCready P.M."/>
            <person name="Medina C."/>
            <person name="Morgan J."/>
            <person name="Nelson K."/>
            <person name="Nolan M."/>
            <person name="Ovcharenko I."/>
            <person name="Pitluck S."/>
            <person name="Pollard M."/>
            <person name="Popkie A.P."/>
            <person name="Predki P."/>
            <person name="Quan G."/>
            <person name="Ramirez L."/>
            <person name="Rash S."/>
            <person name="Retterer J."/>
            <person name="Rodriguez A."/>
            <person name="Rogers S."/>
            <person name="Salamov A."/>
            <person name="Salazar A."/>
            <person name="She X."/>
            <person name="Smith D."/>
            <person name="Slezak T."/>
            <person name="Solovyev V."/>
            <person name="Thayer N."/>
            <person name="Tice H."/>
            <person name="Tsai M."/>
            <person name="Ustaszewska A."/>
            <person name="Vo N."/>
            <person name="Wagner M."/>
            <person name="Wheeler J."/>
            <person name="Wu K."/>
            <person name="Xie G."/>
            <person name="Yang J."/>
            <person name="Dubchak I."/>
            <person name="Furey T.S."/>
            <person name="DeJong P."/>
            <person name="Dickson M."/>
            <person name="Gordon D."/>
            <person name="Eichler E.E."/>
            <person name="Pennacchio L.A."/>
            <person name="Richardson P."/>
            <person name="Stubbs L."/>
            <person name="Rokhsar D.S."/>
            <person name="Myers R.M."/>
            <person name="Rubin E.M."/>
            <person name="Lucas S.M."/>
        </authorList>
    </citation>
    <scope>NUCLEOTIDE SEQUENCE [LARGE SCALE GENOMIC DNA]</scope>
</reference>
<reference key="5">
    <citation type="journal article" date="2004" name="Genome Res.">
        <title>The status, quality, and expansion of the NIH full-length cDNA project: the Mammalian Gene Collection (MGC).</title>
        <authorList>
            <consortium name="The MGC Project Team"/>
        </authorList>
    </citation>
    <scope>NUCLEOTIDE SEQUENCE [LARGE SCALE MRNA] (ISOFORM 1)</scope>
    <source>
        <tissue>Brain</tissue>
    </source>
</reference>
<reference key="6">
    <citation type="journal article" date="1987" name="FEBS Lett.">
        <title>The family of human Na+,K+-ATPase genes. A partial nucleotide sequence related to the alpha-subunit.</title>
        <authorList>
            <person name="Ovchinnikov Y.A."/>
            <person name="Monastyrskaya G.S."/>
            <person name="Broude N.E."/>
            <person name="Allikmets R.L."/>
            <person name="Ushkaryov Y.A."/>
            <person name="Melkov A.M."/>
            <person name="Smirnov Y.V."/>
            <person name="Malyshev I.V."/>
            <person name="Dulubova I.E."/>
            <person name="Petrukhin K.E."/>
            <person name="Gryshin A.V."/>
            <person name="Sverdlov V.E."/>
            <person name="Kiyatkin N.I."/>
            <person name="Kostina M.B."/>
            <person name="Modyanov N.N."/>
            <person name="Sverdlov E.D."/>
        </authorList>
    </citation>
    <scope>NUCLEOTIDE SEQUENCE [GENOMIC DNA] OF 120-387; 494-538 AND 545-1013</scope>
</reference>
<reference key="7">
    <citation type="journal article" date="1987" name="FEBS Lett.">
        <authorList>
            <person name="Ovchinnikov Y.A."/>
            <person name="Monastyrskaya G.S."/>
            <person name="Broude N.E."/>
            <person name="Allikmets R.L."/>
            <person name="Ushkaryov Y.A."/>
            <person name="Melkov A.M."/>
            <person name="Smirnov Y.V."/>
            <person name="Malyshev I.V."/>
            <person name="Dulubova I.E."/>
            <person name="Petrukhin K.E."/>
            <person name="Gryshin A.V."/>
            <person name="Sverdlov V.E."/>
            <person name="Kiyatkin N.I."/>
            <person name="Kostina M.B."/>
            <person name="Modyanov N.N."/>
            <person name="Sverdlov E.D."/>
        </authorList>
    </citation>
    <scope>ERRATUM OF PUBMED:3030810</scope>
</reference>
<reference key="8">
    <citation type="journal article" date="1987" name="FEBS Lett.">
        <title>The family of human Na+,K+-ATPase genes. No less than five genes and/or pseudogenes related to the alpha-subunit.</title>
        <authorList>
            <person name="Sverdlov E.D."/>
            <person name="Monastyrskaya G.S."/>
            <person name="Broude N.E."/>
            <person name="Ushkaryov Y.A."/>
            <person name="Allikmets R.L."/>
            <person name="Melkov A.M."/>
            <person name="Smirnov Y.V."/>
            <person name="Malyshev I.V."/>
            <person name="Dulubova I.E."/>
            <person name="Petrukhin K.E."/>
            <person name="Gryshin A.V."/>
            <person name="Kiyatkin N.I."/>
            <person name="Kostina M.B."/>
            <person name="Sverdlov V.E."/>
            <person name="Modyanov N.N."/>
            <person name="Ovchinnikov Y.A."/>
        </authorList>
    </citation>
    <scope>NUCLEOTIDE SEQUENCE [GENOMIC DNA] OF 243-434</scope>
</reference>
<reference key="9">
    <citation type="journal article" date="1994" name="Mol. Membr. Biol.">
        <title>Subcellular distribution and immunocytochemical localization of Na,K-ATPase subunit isoforms in human skeletal muscle.</title>
        <authorList>
            <person name="Hundal H.S."/>
            <person name="Maxwell D.L."/>
            <person name="Ahmed A."/>
            <person name="Darakhshan F."/>
            <person name="Mitsumoto Y."/>
            <person name="Klip A."/>
        </authorList>
    </citation>
    <scope>SUBCELLULAR LOCATION</scope>
</reference>
<reference key="10">
    <citation type="journal article" date="2011" name="BMC Syst. Biol.">
        <title>Initial characterization of the human central proteome.</title>
        <authorList>
            <person name="Burkard T.R."/>
            <person name="Planyavsky M."/>
            <person name="Kaupe I."/>
            <person name="Breitwieser F.P."/>
            <person name="Buerckstuemmer T."/>
            <person name="Bennett K.L."/>
            <person name="Superti-Furga G."/>
            <person name="Colinge J."/>
        </authorList>
    </citation>
    <scope>IDENTIFICATION BY MASS SPECTROMETRY [LARGE SCALE ANALYSIS]</scope>
</reference>
<reference key="11">
    <citation type="journal article" date="2004" name="Neuron">
        <title>Mutations in the Na(+)/K(+)-ATPase alpha-3 gene ATP1A3 are associated with rapid-onset dystonia parkinsonism.</title>
        <authorList>
            <person name="de Carvalho Aguiar P."/>
            <person name="Sweadner K.J."/>
            <person name="Penniston J.T."/>
            <person name="Zaremba J."/>
            <person name="Liu L."/>
            <person name="Caton M."/>
            <person name="Linazasoro G."/>
            <person name="Borg M."/>
            <person name="Tijssen M.A.J."/>
            <person name="Bressman S.B."/>
            <person name="Dobyns W.B."/>
            <person name="Brashear A."/>
            <person name="Ozelius L.J."/>
        </authorList>
    </citation>
    <scope>VARIANTS DYT12 THR-274; LYS-277; MET-613; SER-758; LEU-780 AND TYR-801</scope>
</reference>
<reference key="12">
    <citation type="journal article" date="2009" name="Hum. Mol. Genet.">
        <title>A C-terminal mutation of ATP1A3 underscores the crucial role of sodium affinity in the pathophysiology of rapid-onset dystonia-parkinsonism.</title>
        <authorList>
            <person name="Blanco-Arias P."/>
            <person name="Einholm A.P."/>
            <person name="Mamsa H."/>
            <person name="Concheiro C."/>
            <person name="Gutierrez-de-Teran H."/>
            <person name="Romero J."/>
            <person name="Toustrup-Jensen M.S."/>
            <person name="Carracedo A."/>
            <person name="Jen J.C."/>
            <person name="Vilsen B."/>
            <person name="Sobrido M.J."/>
        </authorList>
    </citation>
    <scope>VARIANT DYT12 TYR-1013 EXT</scope>
    <scope>CHARACTERIZATION OF VARIANT DYT12 TYR-1013 EXT</scope>
</reference>
<reference key="13">
    <citation type="journal article" date="2009" name="Neurology">
        <title>Rapid-onset dystonia-parkinsonism in a child with a novel atp1a3 gene mutation.</title>
        <authorList>
            <person name="Anselm I.A."/>
            <person name="Sweadner K.J."/>
            <person name="Gollamudi S."/>
            <person name="Ozelius L.J."/>
            <person name="Darras B.T."/>
        </authorList>
    </citation>
    <scope>VARIANT DYT12 ASN-923</scope>
</reference>
<reference key="14">
    <citation type="journal article" date="2012" name="Lancet Neurol.">
        <title>Heterozygous de-novo mutations in ATP1A3 in patients with alternating hemiplegia of childhood: a whole-exome sequencing gene-identification study.</title>
        <authorList>
            <person name="Rosewich H."/>
            <person name="Thiele H."/>
            <person name="Ohlenbusch A."/>
            <person name="Maschke U."/>
            <person name="Altmuller J."/>
            <person name="Frommolt P."/>
            <person name="Zirn B."/>
            <person name="Ebinger F."/>
            <person name="Siemes H."/>
            <person name="Nurnberg P."/>
            <person name="Brockmann K."/>
            <person name="Gartner J."/>
        </authorList>
    </citation>
    <scope>VARIANTS AHC2 ASN-274; ASP-322; PRO-371; CYS-755; ARG-772; ILE-773; ASN-801; LYS-815 AND TYR-923</scope>
</reference>
<reference key="15">
    <citation type="journal article" date="2012" name="Nat. Genet.">
        <title>De novo mutations in ATP1A3 cause alternating hemiplegia of childhood.</title>
        <authorList>
            <person name="Heinzen E.L."/>
            <person name="Swoboda K.J."/>
            <person name="Hitomi Y."/>
            <person name="Gurrieri F."/>
            <person name="Nicole S."/>
            <person name="de Vries B."/>
            <person name="Tiziano F.D."/>
            <person name="Fontaine B."/>
            <person name="Walley N.M."/>
            <person name="Heavin S."/>
            <person name="Panagiotakaki E."/>
            <person name="Neri G."/>
            <person name="Koelewijn S."/>
            <person name="Kamphorst J."/>
            <person name="Geilenkirchen M."/>
            <person name="Pelzer N."/>
            <person name="Laan L."/>
            <person name="Haan J."/>
            <person name="Ferrari M."/>
            <person name="van den Maagdenberg A.M."/>
            <person name="Zucca C."/>
            <person name="Bassi M.T."/>
            <person name="Franchini F."/>
            <person name="Vavassori R."/>
            <person name="Giannotta M."/>
            <person name="Gobbi G."/>
            <person name="Granata T."/>
            <person name="Nardocci N."/>
            <person name="De Grandis E."/>
            <person name="Veneselli E."/>
            <person name="Stagnaro M."/>
            <person name="Vigevano F."/>
            <person name="Oechsler C."/>
            <person name="Arzimanoglou A."/>
            <person name="Ninan M."/>
            <person name="Neville B."/>
            <person name="Ebinger F."/>
            <person name="Fons C."/>
            <person name="Campistol J."/>
            <person name="Kemlink D."/>
            <person name="Nevsimalova S."/>
            <person name="Peeters-Scholte C."/>
            <person name="Casaer P."/>
            <person name="Casari G."/>
            <person name="Sange G."/>
            <person name="Spiel G."/>
            <person name="Martinelli Boneschi F."/>
            <person name="Schyns T."/>
            <person name="Crawley F."/>
            <person name="Poncelin D."/>
            <person name="Fiori S."/>
            <person name="Abiusi E."/>
            <person name="Di Pietro L."/>
            <person name="Sweney M.T."/>
            <person name="Newcomb T.M."/>
            <person name="Viollet L."/>
            <person name="Huff C."/>
            <person name="Jorde L.B."/>
            <person name="Reyna S.P."/>
            <person name="Murphy K.J."/>
            <person name="Shianna K.V."/>
            <person name="Gumbs C.E."/>
            <person name="Little L."/>
            <person name="Silver K."/>
            <person name="Ptacek L.J."/>
            <person name="Ferrari M.D."/>
            <person name="Bye A.M."/>
            <person name="Herkes G.K."/>
            <person name="Whitelaw C.M."/>
            <person name="Webb D."/>
            <person name="Lynch B.J."/>
            <person name="Uldall P."/>
            <person name="King M.D."/>
            <person name="Scheffer I.E."/>
            <person name="Sisodiya S.M."/>
            <person name="Mikati M.A."/>
            <person name="Goldstein D.B."/>
        </authorList>
    </citation>
    <scope>VARIANTS AHC2 TYR-137; PHE-137; LEU-140; ASN-220; ASN-274; PHE-333; SER-755; SER-773; ASN-801; ARG-806; SER-810; PRO-811; LYS-815; VAL-919 DEL; ARG-947; ASP-955 AND TYR-992</scope>
    <scope>CHARACTERIZATION OF VARIANTS AHC2 PHE-137; PHE-333; ASN-801; PRO-811 AND LYS-815</scope>
</reference>
<reference key="16">
    <citation type="journal article" date="2013" name="PLoS ONE">
        <title>Identification of ATP1A3 mutations by exome sequencing as the cause of alternating hemiplegia of childhood in Japanese patients.</title>
        <authorList>
            <person name="Ishii A."/>
            <person name="Saito Y."/>
            <person name="Mitsui J."/>
            <person name="Ishiura H."/>
            <person name="Yoshimura J."/>
            <person name="Arai H."/>
            <person name="Yamashita S."/>
            <person name="Kimura S."/>
            <person name="Oguni H."/>
            <person name="Morishita S."/>
            <person name="Tsuji S."/>
            <person name="Sasaki M."/>
            <person name="Hirose S."/>
        </authorList>
    </citation>
    <scope>VARIANTS AHC2 CYS-755; ASN-801; LYS-815 AND TYR-927</scope>
</reference>
<reference key="17">
    <citation type="journal article" date="2014" name="Orphanet J. Rare Dis.">
        <title>A novel recurrent mutation in ATP1A3 causes CAPOS syndrome.</title>
        <authorList>
            <person name="Demos M.K."/>
            <person name="van Karnebeek C.D."/>
            <person name="Ross C.J."/>
            <person name="Adam S."/>
            <person name="Shen Y."/>
            <person name="Zhan S.H."/>
            <person name="Shyr C."/>
            <person name="Horvath G."/>
            <person name="Suri M."/>
            <person name="Fryer A."/>
            <person name="Jones S.J."/>
            <person name="Friedman J.M."/>
        </authorList>
    </citation>
    <scope>INVOLVEMENT IN CAPOS</scope>
    <scope>VARIANT CAPOS LYS-818</scope>
</reference>
<reference key="18">
    <citation type="journal article" date="2014" name="Biochim. Biophys. Acta">
        <title>Alternating Hemiplegia of Childhood mutations have a differential effect on Na(+),K(+)-ATPase activity and ouabain binding.</title>
        <authorList>
            <person name="Weigand K.M."/>
            <person name="Messchaert M."/>
            <person name="Swarts H.G."/>
            <person name="Russel F.G."/>
            <person name="Koenderink J.B."/>
        </authorList>
    </citation>
    <scope>CHARACTERIZATION OF VARIANTS AHC2 TYR-137; ASN-220; ASN-127; ASN-801; LYS-815 AND ARG-947</scope>
</reference>
<reference key="19">
    <citation type="journal article" date="2016" name="J. Med. Genet.">
        <title>Improving diagnosis and broadening the phenotypes in early-onset seizure and severe developmental delay disorders through gene panel analysis.</title>
        <authorList>
            <person name="Trump N."/>
            <person name="McTague A."/>
            <person name="Brittain H."/>
            <person name="Papandreou A."/>
            <person name="Meyer E."/>
            <person name="Ngoh A."/>
            <person name="Palmer R."/>
            <person name="Morrogh D."/>
            <person name="Boustred C."/>
            <person name="Hurst J.A."/>
            <person name="Jenkins L."/>
            <person name="Kurian M.A."/>
            <person name="Scott R.H."/>
        </authorList>
    </citation>
    <scope>VARIANT THR-320</scope>
    <scope>VARIANT AHC2 ARG-947</scope>
</reference>
<reference key="20">
    <citation type="journal article" date="2021" name="Brain">
        <title>ATP1A2- and ATP1A3-associated early profound epileptic encephalopathy and polymicrogyria.</title>
        <authorList>
            <consortium name="ATP1A2/A3-collaborators"/>
            <person name="Vetro A."/>
            <person name="Nielsen H.N."/>
            <person name="Holm R."/>
            <person name="Hevner R.F."/>
            <person name="Parrini E."/>
            <person name="Powis Z."/>
            <person name="Moeller R.S."/>
            <person name="Bellan C."/>
            <person name="Simonati A."/>
            <person name="Lesca G."/>
            <person name="Helbig K.L."/>
            <person name="Palmer E.E."/>
            <person name="Mei D."/>
            <person name="Ballardini E."/>
            <person name="Van Haeringen A."/>
            <person name="Syrbe S."/>
            <person name="Leuzzi V."/>
            <person name="Cioni G."/>
            <person name="Curry C.J."/>
            <person name="Costain G."/>
            <person name="Santucci M."/>
            <person name="Chong K."/>
            <person name="Mancini G.M.S."/>
            <person name="Clayton-Smith J."/>
            <person name="Bigoni S."/>
            <person name="Scheffer I.E."/>
            <person name="Dobyns W.B."/>
            <person name="Vilsen B."/>
            <person name="Guerrini R."/>
        </authorList>
    </citation>
    <scope>VARIANTS DEE99 ARG-292; VAL-316; PRO-361; TYR-609; LYS-764 DEL; ARG-775; ASN-801; PHE-857 DEL; TYR-887; PRO-888; TRP-893; PRO-924 AND PRO-972 DEL</scope>
    <scope>INVOLVEMENT IN DEE99</scope>
    <scope>FUNCTION</scope>
    <scope>CHARACTERIZATION OF VARIANTS DEE99 ARG-292; VAL-316; TYR-887 AND PRO-972 DEL</scope>
</reference>
<dbReference type="EC" id="7.2.2.13"/>
<dbReference type="EMBL" id="M37457">
    <property type="protein sequence ID" value="AAA51798.1"/>
    <property type="molecule type" value="Genomic_DNA"/>
</dbReference>
<dbReference type="EMBL" id="M37436">
    <property type="protein sequence ID" value="AAA51798.1"/>
    <property type="status" value="JOINED"/>
    <property type="molecule type" value="Genomic_DNA"/>
</dbReference>
<dbReference type="EMBL" id="M37437">
    <property type="protein sequence ID" value="AAA51798.1"/>
    <property type="status" value="JOINED"/>
    <property type="molecule type" value="Genomic_DNA"/>
</dbReference>
<dbReference type="EMBL" id="M37438">
    <property type="protein sequence ID" value="AAA51798.1"/>
    <property type="status" value="JOINED"/>
    <property type="molecule type" value="Genomic_DNA"/>
</dbReference>
<dbReference type="EMBL" id="M37462">
    <property type="protein sequence ID" value="AAA51798.1"/>
    <property type="status" value="JOINED"/>
    <property type="molecule type" value="Genomic_DNA"/>
</dbReference>
<dbReference type="EMBL" id="M37439">
    <property type="protein sequence ID" value="AAA51798.1"/>
    <property type="status" value="JOINED"/>
    <property type="molecule type" value="Genomic_DNA"/>
</dbReference>
<dbReference type="EMBL" id="M37440">
    <property type="protein sequence ID" value="AAA51798.1"/>
    <property type="status" value="JOINED"/>
    <property type="molecule type" value="Genomic_DNA"/>
</dbReference>
<dbReference type="EMBL" id="M37441">
    <property type="protein sequence ID" value="AAA51798.1"/>
    <property type="status" value="JOINED"/>
    <property type="molecule type" value="Genomic_DNA"/>
</dbReference>
<dbReference type="EMBL" id="M37442">
    <property type="protein sequence ID" value="AAA51798.1"/>
    <property type="status" value="JOINED"/>
    <property type="molecule type" value="Genomic_DNA"/>
</dbReference>
<dbReference type="EMBL" id="M37443">
    <property type="protein sequence ID" value="AAA51798.1"/>
    <property type="status" value="JOINED"/>
    <property type="molecule type" value="Genomic_DNA"/>
</dbReference>
<dbReference type="EMBL" id="M37444">
    <property type="protein sequence ID" value="AAA51798.1"/>
    <property type="status" value="JOINED"/>
    <property type="molecule type" value="Genomic_DNA"/>
</dbReference>
<dbReference type="EMBL" id="M37445">
    <property type="protein sequence ID" value="AAA51798.1"/>
    <property type="status" value="JOINED"/>
    <property type="molecule type" value="Genomic_DNA"/>
</dbReference>
<dbReference type="EMBL" id="M37447">
    <property type="protein sequence ID" value="AAA51798.1"/>
    <property type="status" value="JOINED"/>
    <property type="molecule type" value="Genomic_DNA"/>
</dbReference>
<dbReference type="EMBL" id="M37448">
    <property type="protein sequence ID" value="AAA51798.1"/>
    <property type="status" value="JOINED"/>
    <property type="molecule type" value="Genomic_DNA"/>
</dbReference>
<dbReference type="EMBL" id="M37449">
    <property type="protein sequence ID" value="AAA51798.1"/>
    <property type="status" value="JOINED"/>
    <property type="molecule type" value="Genomic_DNA"/>
</dbReference>
<dbReference type="EMBL" id="M37450">
    <property type="protein sequence ID" value="AAA51798.1"/>
    <property type="status" value="JOINED"/>
    <property type="molecule type" value="Genomic_DNA"/>
</dbReference>
<dbReference type="EMBL" id="M37451">
    <property type="protein sequence ID" value="AAA51798.1"/>
    <property type="status" value="JOINED"/>
    <property type="molecule type" value="Genomic_DNA"/>
</dbReference>
<dbReference type="EMBL" id="M37452">
    <property type="protein sequence ID" value="AAA51798.1"/>
    <property type="status" value="JOINED"/>
    <property type="molecule type" value="Genomic_DNA"/>
</dbReference>
<dbReference type="EMBL" id="M37453">
    <property type="protein sequence ID" value="AAA51798.1"/>
    <property type="status" value="JOINED"/>
    <property type="molecule type" value="Genomic_DNA"/>
</dbReference>
<dbReference type="EMBL" id="M37454">
    <property type="protein sequence ID" value="AAA51798.1"/>
    <property type="status" value="JOINED"/>
    <property type="molecule type" value="Genomic_DNA"/>
</dbReference>
<dbReference type="EMBL" id="M37455">
    <property type="protein sequence ID" value="AAA51798.1"/>
    <property type="status" value="JOINED"/>
    <property type="molecule type" value="Genomic_DNA"/>
</dbReference>
<dbReference type="EMBL" id="M37456">
    <property type="protein sequence ID" value="AAA51798.1"/>
    <property type="status" value="JOINED"/>
    <property type="molecule type" value="Genomic_DNA"/>
</dbReference>
<dbReference type="EMBL" id="X12910">
    <property type="protein sequence ID" value="CAA31390.1"/>
    <property type="molecule type" value="Genomic_DNA"/>
</dbReference>
<dbReference type="EMBL" id="X12911">
    <property type="protein sequence ID" value="CAA31390.1"/>
    <property type="status" value="JOINED"/>
    <property type="molecule type" value="Genomic_DNA"/>
</dbReference>
<dbReference type="EMBL" id="X12912">
    <property type="protein sequence ID" value="CAA31390.1"/>
    <property type="status" value="JOINED"/>
    <property type="molecule type" value="Genomic_DNA"/>
</dbReference>
<dbReference type="EMBL" id="X12913">
    <property type="protein sequence ID" value="CAA31390.1"/>
    <property type="status" value="JOINED"/>
    <property type="molecule type" value="Genomic_DNA"/>
</dbReference>
<dbReference type="EMBL" id="X12914">
    <property type="protein sequence ID" value="CAA31390.1"/>
    <property type="status" value="JOINED"/>
    <property type="molecule type" value="Genomic_DNA"/>
</dbReference>
<dbReference type="EMBL" id="X12915">
    <property type="protein sequence ID" value="CAA31390.1"/>
    <property type="status" value="JOINED"/>
    <property type="molecule type" value="Genomic_DNA"/>
</dbReference>
<dbReference type="EMBL" id="X12916">
    <property type="protein sequence ID" value="CAA31390.1"/>
    <property type="status" value="JOINED"/>
    <property type="molecule type" value="Genomic_DNA"/>
</dbReference>
<dbReference type="EMBL" id="X12917">
    <property type="protein sequence ID" value="CAA31390.1"/>
    <property type="status" value="JOINED"/>
    <property type="molecule type" value="Genomic_DNA"/>
</dbReference>
<dbReference type="EMBL" id="X12919">
    <property type="protein sequence ID" value="CAA31390.1"/>
    <property type="status" value="JOINED"/>
    <property type="molecule type" value="Genomic_DNA"/>
</dbReference>
<dbReference type="EMBL" id="X12920">
    <property type="protein sequence ID" value="CAA31390.1"/>
    <property type="status" value="JOINED"/>
    <property type="molecule type" value="Genomic_DNA"/>
</dbReference>
<dbReference type="EMBL" id="X12921">
    <property type="protein sequence ID" value="CAA31390.1"/>
    <property type="status" value="JOINED"/>
    <property type="molecule type" value="Genomic_DNA"/>
</dbReference>
<dbReference type="EMBL" id="X12922">
    <property type="protein sequence ID" value="CAA31390.1"/>
    <property type="status" value="JOINED"/>
    <property type="molecule type" value="Genomic_DNA"/>
</dbReference>
<dbReference type="EMBL" id="X12923">
    <property type="protein sequence ID" value="CAA31390.1"/>
    <property type="status" value="JOINED"/>
    <property type="molecule type" value="Genomic_DNA"/>
</dbReference>
<dbReference type="EMBL" id="AK295078">
    <property type="protein sequence ID" value="BAH11966.1"/>
    <property type="molecule type" value="mRNA"/>
</dbReference>
<dbReference type="EMBL" id="AK296557">
    <property type="protein sequence ID" value="BAH12387.1"/>
    <property type="molecule type" value="mRNA"/>
</dbReference>
<dbReference type="EMBL" id="AC010616">
    <property type="status" value="NOT_ANNOTATED_CDS"/>
    <property type="molecule type" value="Genomic_DNA"/>
</dbReference>
<dbReference type="EMBL" id="BC009282">
    <property type="protein sequence ID" value="AAH09282.1"/>
    <property type="molecule type" value="mRNA"/>
</dbReference>
<dbReference type="EMBL" id="BC009394">
    <property type="protein sequence ID" value="AAH09394.1"/>
    <property type="molecule type" value="mRNA"/>
</dbReference>
<dbReference type="EMBL" id="BC015566">
    <property type="protein sequence ID" value="AAH15566.1"/>
    <property type="molecule type" value="mRNA"/>
</dbReference>
<dbReference type="EMBL" id="M28286">
    <property type="protein sequence ID" value="AAA52285.1"/>
    <property type="molecule type" value="Genomic_DNA"/>
</dbReference>
<dbReference type="EMBL" id="M28284">
    <property type="protein sequence ID" value="AAA52285.1"/>
    <property type="status" value="JOINED"/>
    <property type="molecule type" value="Genomic_DNA"/>
</dbReference>
<dbReference type="EMBL" id="M28285">
    <property type="protein sequence ID" value="AAA52285.1"/>
    <property type="status" value="JOINED"/>
    <property type="molecule type" value="Genomic_DNA"/>
</dbReference>
<dbReference type="EMBL" id="M28293">
    <property type="protein sequence ID" value="AAA52286.1"/>
    <property type="molecule type" value="Genomic_DNA"/>
</dbReference>
<dbReference type="EMBL" id="M28287">
    <property type="protein sequence ID" value="AAA52286.1"/>
    <property type="status" value="JOINED"/>
    <property type="molecule type" value="Genomic_DNA"/>
</dbReference>
<dbReference type="EMBL" id="M35821">
    <property type="protein sequence ID" value="AAA52286.1"/>
    <property type="status" value="JOINED"/>
    <property type="molecule type" value="Genomic_DNA"/>
</dbReference>
<dbReference type="EMBL" id="M35822">
    <property type="protein sequence ID" value="AAA52286.1"/>
    <property type="status" value="JOINED"/>
    <property type="molecule type" value="Genomic_DNA"/>
</dbReference>
<dbReference type="EMBL" id="M28289">
    <property type="protein sequence ID" value="AAA52286.1"/>
    <property type="status" value="JOINED"/>
    <property type="molecule type" value="Genomic_DNA"/>
</dbReference>
<dbReference type="EMBL" id="M28290">
    <property type="protein sequence ID" value="AAA52286.1"/>
    <property type="status" value="JOINED"/>
    <property type="molecule type" value="Genomic_DNA"/>
</dbReference>
<dbReference type="EMBL" id="M28291">
    <property type="protein sequence ID" value="AAA52286.1"/>
    <property type="status" value="JOINED"/>
    <property type="molecule type" value="Genomic_DNA"/>
</dbReference>
<dbReference type="EMBL" id="M28292">
    <property type="protein sequence ID" value="AAA52286.1"/>
    <property type="status" value="JOINED"/>
    <property type="molecule type" value="Genomic_DNA"/>
</dbReference>
<dbReference type="EMBL" id="M27577">
    <property type="protein sequence ID" value="AAA58380.1"/>
    <property type="molecule type" value="Genomic_DNA"/>
</dbReference>
<dbReference type="EMBL" id="M27570">
    <property type="protein sequence ID" value="AAA58380.1"/>
    <property type="status" value="JOINED"/>
    <property type="molecule type" value="Genomic_DNA"/>
</dbReference>
<dbReference type="EMBL" id="M27573">
    <property type="protein sequence ID" value="AAA58380.1"/>
    <property type="status" value="JOINED"/>
    <property type="molecule type" value="Genomic_DNA"/>
</dbReference>
<dbReference type="CCDS" id="CCDS12594.1">
    <molecule id="P13637-1"/>
</dbReference>
<dbReference type="CCDS" id="CCDS58663.1">
    <molecule id="P13637-2"/>
</dbReference>
<dbReference type="CCDS" id="CCDS58664.1">
    <molecule id="P13637-3"/>
</dbReference>
<dbReference type="PIR" id="S00801">
    <property type="entry name" value="S00801"/>
</dbReference>
<dbReference type="RefSeq" id="NP_001243142.1">
    <molecule id="P13637-2"/>
    <property type="nucleotide sequence ID" value="NM_001256213.2"/>
</dbReference>
<dbReference type="RefSeq" id="NP_001243143.1">
    <molecule id="P13637-3"/>
    <property type="nucleotide sequence ID" value="NM_001256214.2"/>
</dbReference>
<dbReference type="RefSeq" id="NP_689509.1">
    <molecule id="P13637-1"/>
    <property type="nucleotide sequence ID" value="NM_152296.5"/>
</dbReference>
<dbReference type="PDB" id="8D3U">
    <property type="method" value="EM"/>
    <property type="resolution" value="3.70 A"/>
    <property type="chains" value="A=18-1013"/>
</dbReference>
<dbReference type="PDB" id="8D3V">
    <property type="method" value="EM"/>
    <property type="resolution" value="3.40 A"/>
    <property type="chains" value="A=1-1013"/>
</dbReference>
<dbReference type="PDB" id="8D3W">
    <property type="method" value="EM"/>
    <property type="resolution" value="3.50 A"/>
    <property type="chains" value="A=1-1013"/>
</dbReference>
<dbReference type="PDB" id="8D3X">
    <property type="method" value="EM"/>
    <property type="resolution" value="4.10 A"/>
    <property type="chains" value="A=1-1013"/>
</dbReference>
<dbReference type="PDB" id="8D3Y">
    <property type="method" value="EM"/>
    <property type="resolution" value="3.90 A"/>
    <property type="chains" value="A=1-1013"/>
</dbReference>
<dbReference type="PDBsum" id="8D3U"/>
<dbReference type="PDBsum" id="8D3V"/>
<dbReference type="PDBsum" id="8D3W"/>
<dbReference type="PDBsum" id="8D3X"/>
<dbReference type="PDBsum" id="8D3Y"/>
<dbReference type="EMDB" id="EMD-27164"/>
<dbReference type="EMDB" id="EMD-27165"/>
<dbReference type="EMDB" id="EMD-27166"/>
<dbReference type="EMDB" id="EMD-27167"/>
<dbReference type="EMDB" id="EMD-27168"/>
<dbReference type="SMR" id="P13637"/>
<dbReference type="BioGRID" id="106968">
    <property type="interactions" value="338"/>
</dbReference>
<dbReference type="CORUM" id="P13637"/>
<dbReference type="FunCoup" id="P13637">
    <property type="interactions" value="1050"/>
</dbReference>
<dbReference type="IntAct" id="P13637">
    <property type="interactions" value="209"/>
</dbReference>
<dbReference type="MINT" id="P13637"/>
<dbReference type="STRING" id="9606.ENSP00000444688"/>
<dbReference type="ChEMBL" id="CHEMBL2095186"/>
<dbReference type="DrugBank" id="DB09020">
    <property type="generic name" value="Bisacodyl"/>
</dbReference>
<dbReference type="DrugBank" id="DB01396">
    <property type="generic name" value="Digitoxin"/>
</dbReference>
<dbReference type="DrugBank" id="DB00390">
    <property type="generic name" value="Digoxin"/>
</dbReference>
<dbReference type="DrugBank" id="DB06157">
    <property type="generic name" value="Istaroxime"/>
</dbReference>
<dbReference type="DrugBank" id="DB12843">
    <property type="generic name" value="Oleandrin"/>
</dbReference>
<dbReference type="DrugBank" id="DB01250">
    <property type="generic name" value="Olsalazine"/>
</dbReference>
<dbReference type="DrugBank" id="DB01092">
    <property type="generic name" value="Ouabain"/>
</dbReference>
<dbReference type="DrugBank" id="DB12350">
    <property type="generic name" value="Rostafuroxin"/>
</dbReference>
<dbReference type="DrugBank" id="DB09479">
    <property type="generic name" value="Rubidium Rb-82"/>
</dbReference>
<dbReference type="DrugBank" id="DB16690">
    <property type="generic name" value="Tegoprazan"/>
</dbReference>
<dbReference type="DrugCentral" id="P13637"/>
<dbReference type="TCDB" id="3.A.3.1.1">
    <property type="family name" value="the p-type atpase (p-atpase) superfamily"/>
</dbReference>
<dbReference type="GlyGen" id="P13637">
    <property type="glycosylation" value="1 site, 1 O-linked glycan (1 site)"/>
</dbReference>
<dbReference type="iPTMnet" id="P13637"/>
<dbReference type="PhosphoSitePlus" id="P13637"/>
<dbReference type="SwissPalm" id="P13637"/>
<dbReference type="BioMuta" id="ATP1A3"/>
<dbReference type="DMDM" id="116241260"/>
<dbReference type="jPOST" id="P13637"/>
<dbReference type="MassIVE" id="P13637"/>
<dbReference type="PaxDb" id="9606-ENSP00000444688"/>
<dbReference type="PeptideAtlas" id="P13637"/>
<dbReference type="ProteomicsDB" id="27209"/>
<dbReference type="ProteomicsDB" id="52946">
    <molecule id="P13637-1"/>
</dbReference>
<dbReference type="ProteomicsDB" id="6459"/>
<dbReference type="Antibodypedia" id="30869">
    <property type="antibodies" value="213 antibodies from 30 providers"/>
</dbReference>
<dbReference type="DNASU" id="478"/>
<dbReference type="Ensembl" id="ENST00000543770.5">
    <molecule id="P13637-2"/>
    <property type="protein sequence ID" value="ENSP00000437577.1"/>
    <property type="gene ID" value="ENSG00000105409.19"/>
</dbReference>
<dbReference type="Ensembl" id="ENST00000545399.6">
    <molecule id="P13637-3"/>
    <property type="protein sequence ID" value="ENSP00000444688.1"/>
    <property type="gene ID" value="ENSG00000105409.19"/>
</dbReference>
<dbReference type="Ensembl" id="ENST00000648268.1">
    <molecule id="P13637-1"/>
    <property type="protein sequence ID" value="ENSP00000498113.1"/>
    <property type="gene ID" value="ENSG00000105409.19"/>
</dbReference>
<dbReference type="GeneID" id="478"/>
<dbReference type="KEGG" id="hsa:478"/>
<dbReference type="MANE-Select" id="ENST00000648268.1">
    <property type="protein sequence ID" value="ENSP00000498113.1"/>
    <property type="RefSeq nucleotide sequence ID" value="NM_152296.5"/>
    <property type="RefSeq protein sequence ID" value="NP_689509.1"/>
</dbReference>
<dbReference type="UCSC" id="uc002osg.4">
    <molecule id="P13637-1"/>
    <property type="organism name" value="human"/>
</dbReference>
<dbReference type="AGR" id="HGNC:801"/>
<dbReference type="CTD" id="478"/>
<dbReference type="DisGeNET" id="478"/>
<dbReference type="GeneCards" id="ATP1A3"/>
<dbReference type="GeneReviews" id="ATP1A3"/>
<dbReference type="HGNC" id="HGNC:801">
    <property type="gene designation" value="ATP1A3"/>
</dbReference>
<dbReference type="HPA" id="ENSG00000105409">
    <property type="expression patterns" value="Group enriched (brain, heart muscle, retina)"/>
</dbReference>
<dbReference type="MalaCards" id="ATP1A3"/>
<dbReference type="MIM" id="128235">
    <property type="type" value="phenotype"/>
</dbReference>
<dbReference type="MIM" id="182350">
    <property type="type" value="gene"/>
</dbReference>
<dbReference type="MIM" id="601338">
    <property type="type" value="phenotype"/>
</dbReference>
<dbReference type="MIM" id="614820">
    <property type="type" value="phenotype"/>
</dbReference>
<dbReference type="MIM" id="619606">
    <property type="type" value="phenotype"/>
</dbReference>
<dbReference type="neXtProt" id="NX_P13637"/>
<dbReference type="OpenTargets" id="ENSG00000105409"/>
<dbReference type="Orphanet" id="2131">
    <property type="disease" value="Alternating hemiplegia of childhood"/>
</dbReference>
<dbReference type="Orphanet" id="1171">
    <property type="disease" value="Cerebellar ataxia-areflexia-pes cavus-optic atrophy-sensorineural hearing loss syndrome"/>
</dbReference>
<dbReference type="Orphanet" id="442835">
    <property type="disease" value="Non-specific early-onset epileptic encephalopathy"/>
</dbReference>
<dbReference type="Orphanet" id="71517">
    <property type="disease" value="Rapid-onset dystonia-parkinsonism"/>
</dbReference>
<dbReference type="PharmGKB" id="PA64"/>
<dbReference type="VEuPathDB" id="HostDB:ENSG00000105409"/>
<dbReference type="eggNOG" id="KOG0203">
    <property type="taxonomic scope" value="Eukaryota"/>
</dbReference>
<dbReference type="GeneTree" id="ENSGT00940000160476"/>
<dbReference type="InParanoid" id="P13637"/>
<dbReference type="OMA" id="FGIDDYI"/>
<dbReference type="OrthoDB" id="3352408at2759"/>
<dbReference type="PAN-GO" id="P13637">
    <property type="GO annotations" value="7 GO annotations based on evolutionary models"/>
</dbReference>
<dbReference type="PhylomeDB" id="P13637"/>
<dbReference type="TreeFam" id="TF312838"/>
<dbReference type="PathwayCommons" id="P13637"/>
<dbReference type="Reactome" id="R-HSA-5578775">
    <property type="pathway name" value="Ion homeostasis"/>
</dbReference>
<dbReference type="Reactome" id="R-HSA-936837">
    <property type="pathway name" value="Ion transport by P-type ATPases"/>
</dbReference>
<dbReference type="Reactome" id="R-HSA-9679191">
    <property type="pathway name" value="Potential therapeutics for SARS"/>
</dbReference>
<dbReference type="SignaLink" id="P13637"/>
<dbReference type="SIGNOR" id="P13637"/>
<dbReference type="BioGRID-ORCS" id="478">
    <property type="hits" value="18 hits in 1153 CRISPR screens"/>
</dbReference>
<dbReference type="CD-CODE" id="FB4E32DD">
    <property type="entry name" value="Presynaptic clusters and postsynaptic densities"/>
</dbReference>
<dbReference type="ChiTaRS" id="ATP1A3">
    <property type="organism name" value="human"/>
</dbReference>
<dbReference type="GeneWiki" id="ATP1A3"/>
<dbReference type="GenomeRNAi" id="478"/>
<dbReference type="Pharos" id="P13637">
    <property type="development level" value="Tclin"/>
</dbReference>
<dbReference type="PRO" id="PR:P13637"/>
<dbReference type="Proteomes" id="UP000005640">
    <property type="component" value="Chromosome 19"/>
</dbReference>
<dbReference type="RNAct" id="P13637">
    <property type="molecule type" value="protein"/>
</dbReference>
<dbReference type="Bgee" id="ENSG00000105409">
    <property type="expression patterns" value="Expressed in superior frontal gyrus and 96 other cell types or tissues"/>
</dbReference>
<dbReference type="ExpressionAtlas" id="P13637">
    <property type="expression patterns" value="baseline and differential"/>
</dbReference>
<dbReference type="GO" id="GO:0030424">
    <property type="term" value="C:axon"/>
    <property type="evidence" value="ECO:0000314"/>
    <property type="project" value="ARUK-UCL"/>
</dbReference>
<dbReference type="GO" id="GO:0005783">
    <property type="term" value="C:endoplasmic reticulum"/>
    <property type="evidence" value="ECO:0000314"/>
    <property type="project" value="UniProtKB"/>
</dbReference>
<dbReference type="GO" id="GO:1903561">
    <property type="term" value="C:extracellular vesicle"/>
    <property type="evidence" value="ECO:0007005"/>
    <property type="project" value="UniProtKB"/>
</dbReference>
<dbReference type="GO" id="GO:0005794">
    <property type="term" value="C:Golgi apparatus"/>
    <property type="evidence" value="ECO:0000314"/>
    <property type="project" value="UniProtKB"/>
</dbReference>
<dbReference type="GO" id="GO:0016020">
    <property type="term" value="C:membrane"/>
    <property type="evidence" value="ECO:0000250"/>
    <property type="project" value="ARUK-UCL"/>
</dbReference>
<dbReference type="GO" id="GO:0098984">
    <property type="term" value="C:neuron to neuron synapse"/>
    <property type="evidence" value="ECO:0000250"/>
    <property type="project" value="ARUK-UCL"/>
</dbReference>
<dbReference type="GO" id="GO:0043025">
    <property type="term" value="C:neuronal cell body"/>
    <property type="evidence" value="ECO:0000314"/>
    <property type="project" value="ARUK-UCL"/>
</dbReference>
<dbReference type="GO" id="GO:0032809">
    <property type="term" value="C:neuronal cell body membrane"/>
    <property type="evidence" value="ECO:0000305"/>
    <property type="project" value="ARUK-UCL"/>
</dbReference>
<dbReference type="GO" id="GO:0031090">
    <property type="term" value="C:organelle membrane"/>
    <property type="evidence" value="ECO:0000316"/>
    <property type="project" value="ARUK-UCL"/>
</dbReference>
<dbReference type="GO" id="GO:0001917">
    <property type="term" value="C:photoreceptor inner segment"/>
    <property type="evidence" value="ECO:0000250"/>
    <property type="project" value="ARUK-UCL"/>
</dbReference>
<dbReference type="GO" id="GO:0060342">
    <property type="term" value="C:photoreceptor inner segment membrane"/>
    <property type="evidence" value="ECO:0000250"/>
    <property type="project" value="ARUK-UCL"/>
</dbReference>
<dbReference type="GO" id="GO:0005886">
    <property type="term" value="C:plasma membrane"/>
    <property type="evidence" value="ECO:0000314"/>
    <property type="project" value="UniProtKB"/>
</dbReference>
<dbReference type="GO" id="GO:0005890">
    <property type="term" value="C:sodium:potassium-exchanging ATPase complex"/>
    <property type="evidence" value="ECO:0000314"/>
    <property type="project" value="BHF-UCL"/>
</dbReference>
<dbReference type="GO" id="GO:0045202">
    <property type="term" value="C:synapse"/>
    <property type="evidence" value="ECO:0000250"/>
    <property type="project" value="UniProtKB"/>
</dbReference>
<dbReference type="GO" id="GO:0001540">
    <property type="term" value="F:amyloid-beta binding"/>
    <property type="evidence" value="ECO:0000314"/>
    <property type="project" value="ARUK-UCL"/>
</dbReference>
<dbReference type="GO" id="GO:0005524">
    <property type="term" value="F:ATP binding"/>
    <property type="evidence" value="ECO:0000303"/>
    <property type="project" value="UniProtKB"/>
</dbReference>
<dbReference type="GO" id="GO:0016887">
    <property type="term" value="F:ATP hydrolysis activity"/>
    <property type="evidence" value="ECO:0007669"/>
    <property type="project" value="InterPro"/>
</dbReference>
<dbReference type="GO" id="GO:0046872">
    <property type="term" value="F:metal ion binding"/>
    <property type="evidence" value="ECO:0007669"/>
    <property type="project" value="UniProtKB-KW"/>
</dbReference>
<dbReference type="GO" id="GO:0005391">
    <property type="term" value="F:P-type sodium:potassium-exchanging transporter activity"/>
    <property type="evidence" value="ECO:0000314"/>
    <property type="project" value="BHF-UCL"/>
</dbReference>
<dbReference type="GO" id="GO:0051087">
    <property type="term" value="F:protein-folding chaperone binding"/>
    <property type="evidence" value="ECO:0000353"/>
    <property type="project" value="BHF-UCL"/>
</dbReference>
<dbReference type="GO" id="GO:1990239">
    <property type="term" value="F:steroid hormone binding"/>
    <property type="evidence" value="ECO:0000303"/>
    <property type="project" value="BHF-UCL"/>
</dbReference>
<dbReference type="GO" id="GO:0086064">
    <property type="term" value="P:cell communication by electrical coupling involved in cardiac conduction"/>
    <property type="evidence" value="ECO:0000304"/>
    <property type="project" value="BHF-UCL"/>
</dbReference>
<dbReference type="GO" id="GO:1904646">
    <property type="term" value="P:cellular response to amyloid-beta"/>
    <property type="evidence" value="ECO:0000250"/>
    <property type="project" value="ARUK-UCL"/>
</dbReference>
<dbReference type="GO" id="GO:0071383">
    <property type="term" value="P:cellular response to steroid hormone stimulus"/>
    <property type="evidence" value="ECO:0000303"/>
    <property type="project" value="BHF-UCL"/>
</dbReference>
<dbReference type="GO" id="GO:0030007">
    <property type="term" value="P:intracellular potassium ion homeostasis"/>
    <property type="evidence" value="ECO:0000314"/>
    <property type="project" value="BHF-UCL"/>
</dbReference>
<dbReference type="GO" id="GO:0006883">
    <property type="term" value="P:intracellular sodium ion homeostasis"/>
    <property type="evidence" value="ECO:0000314"/>
    <property type="project" value="BHF-UCL"/>
</dbReference>
<dbReference type="GO" id="GO:1990535">
    <property type="term" value="P:neuron projection maintenance"/>
    <property type="evidence" value="ECO:0000316"/>
    <property type="project" value="ARUK-UCL"/>
</dbReference>
<dbReference type="GO" id="GO:1990573">
    <property type="term" value="P:potassium ion import across plasma membrane"/>
    <property type="evidence" value="ECO:0000314"/>
    <property type="project" value="BHF-UCL"/>
</dbReference>
<dbReference type="GO" id="GO:1902600">
    <property type="term" value="P:proton transmembrane transport"/>
    <property type="evidence" value="ECO:0000318"/>
    <property type="project" value="GO_Central"/>
</dbReference>
<dbReference type="GO" id="GO:0060075">
    <property type="term" value="P:regulation of resting membrane potential"/>
    <property type="evidence" value="ECO:0000304"/>
    <property type="project" value="ARUK-UCL"/>
</dbReference>
<dbReference type="GO" id="GO:1903416">
    <property type="term" value="P:response to glycoside"/>
    <property type="evidence" value="ECO:0000303"/>
    <property type="project" value="BHF-UCL"/>
</dbReference>
<dbReference type="GO" id="GO:0036376">
    <property type="term" value="P:sodium ion export across plasma membrane"/>
    <property type="evidence" value="ECO:0000314"/>
    <property type="project" value="BHF-UCL"/>
</dbReference>
<dbReference type="CDD" id="cd02608">
    <property type="entry name" value="P-type_ATPase_Na-K_like"/>
    <property type="match status" value="1"/>
</dbReference>
<dbReference type="FunFam" id="2.70.150.10:FF:000106">
    <property type="entry name" value="Sodium/potassium-transporting ATPase subunit alpha"/>
    <property type="match status" value="1"/>
</dbReference>
<dbReference type="FunFam" id="3.40.1110.10:FF:000001">
    <property type="entry name" value="Sodium/potassium-transporting ATPase subunit alpha"/>
    <property type="match status" value="1"/>
</dbReference>
<dbReference type="FunFam" id="3.40.50.1000:FF:000004">
    <property type="entry name" value="Sodium/potassium-transporting ATPase subunit alpha"/>
    <property type="match status" value="1"/>
</dbReference>
<dbReference type="FunFam" id="1.20.1110.10:FF:000095">
    <property type="entry name" value="Sodium/potassium-transporting ATPase subunit alpha-1"/>
    <property type="match status" value="2"/>
</dbReference>
<dbReference type="Gene3D" id="3.40.1110.10">
    <property type="entry name" value="Calcium-transporting ATPase, cytoplasmic domain N"/>
    <property type="match status" value="1"/>
</dbReference>
<dbReference type="Gene3D" id="2.70.150.10">
    <property type="entry name" value="Calcium-transporting ATPase, cytoplasmic transduction domain A"/>
    <property type="match status" value="1"/>
</dbReference>
<dbReference type="Gene3D" id="1.20.1110.10">
    <property type="entry name" value="Calcium-transporting ATPase, transmembrane domain"/>
    <property type="match status" value="1"/>
</dbReference>
<dbReference type="Gene3D" id="3.40.50.1000">
    <property type="entry name" value="HAD superfamily/HAD-like"/>
    <property type="match status" value="1"/>
</dbReference>
<dbReference type="InterPro" id="IPR006068">
    <property type="entry name" value="ATPase_P-typ_cation-transptr_C"/>
</dbReference>
<dbReference type="InterPro" id="IPR004014">
    <property type="entry name" value="ATPase_P-typ_cation-transptr_N"/>
</dbReference>
<dbReference type="InterPro" id="IPR023299">
    <property type="entry name" value="ATPase_P-typ_cyto_dom_N"/>
</dbReference>
<dbReference type="InterPro" id="IPR018303">
    <property type="entry name" value="ATPase_P-typ_P_site"/>
</dbReference>
<dbReference type="InterPro" id="IPR023298">
    <property type="entry name" value="ATPase_P-typ_TM_dom_sf"/>
</dbReference>
<dbReference type="InterPro" id="IPR008250">
    <property type="entry name" value="ATPase_P-typ_transduc_dom_A_sf"/>
</dbReference>
<dbReference type="InterPro" id="IPR050510">
    <property type="entry name" value="Cation_transp_ATPase_P-type"/>
</dbReference>
<dbReference type="InterPro" id="IPR036412">
    <property type="entry name" value="HAD-like_sf"/>
</dbReference>
<dbReference type="InterPro" id="IPR023214">
    <property type="entry name" value="HAD_sf"/>
</dbReference>
<dbReference type="InterPro" id="IPR005775">
    <property type="entry name" value="P-type_ATPase_IIC"/>
</dbReference>
<dbReference type="InterPro" id="IPR001757">
    <property type="entry name" value="P_typ_ATPase"/>
</dbReference>
<dbReference type="InterPro" id="IPR044492">
    <property type="entry name" value="P_typ_ATPase_HD_dom"/>
</dbReference>
<dbReference type="NCBIfam" id="TIGR01106">
    <property type="entry name" value="ATPase-IIC_X-K"/>
    <property type="match status" value="1"/>
</dbReference>
<dbReference type="NCBIfam" id="TIGR01494">
    <property type="entry name" value="ATPase_P-type"/>
    <property type="match status" value="2"/>
</dbReference>
<dbReference type="PANTHER" id="PTHR43294">
    <property type="entry name" value="SODIUM/POTASSIUM-TRANSPORTING ATPASE SUBUNIT ALPHA"/>
    <property type="match status" value="1"/>
</dbReference>
<dbReference type="PANTHER" id="PTHR43294:SF15">
    <property type="entry name" value="SODIUM_POTASSIUM-TRANSPORTING ATPASE SUBUNIT ALPHA-3"/>
    <property type="match status" value="1"/>
</dbReference>
<dbReference type="Pfam" id="PF13246">
    <property type="entry name" value="Cation_ATPase"/>
    <property type="match status" value="1"/>
</dbReference>
<dbReference type="Pfam" id="PF00689">
    <property type="entry name" value="Cation_ATPase_C"/>
    <property type="match status" value="1"/>
</dbReference>
<dbReference type="Pfam" id="PF00690">
    <property type="entry name" value="Cation_ATPase_N"/>
    <property type="match status" value="1"/>
</dbReference>
<dbReference type="Pfam" id="PF00122">
    <property type="entry name" value="E1-E2_ATPase"/>
    <property type="match status" value="1"/>
</dbReference>
<dbReference type="PRINTS" id="PR00119">
    <property type="entry name" value="CATATPASE"/>
</dbReference>
<dbReference type="PRINTS" id="PR00121">
    <property type="entry name" value="NAKATPASE"/>
</dbReference>
<dbReference type="SFLD" id="SFLDS00003">
    <property type="entry name" value="Haloacid_Dehalogenase"/>
    <property type="match status" value="1"/>
</dbReference>
<dbReference type="SFLD" id="SFLDF00027">
    <property type="entry name" value="p-type_atpase"/>
    <property type="match status" value="1"/>
</dbReference>
<dbReference type="SMART" id="SM00831">
    <property type="entry name" value="Cation_ATPase_N"/>
    <property type="match status" value="1"/>
</dbReference>
<dbReference type="SUPFAM" id="SSF81653">
    <property type="entry name" value="Calcium ATPase, transduction domain A"/>
    <property type="match status" value="1"/>
</dbReference>
<dbReference type="SUPFAM" id="SSF81665">
    <property type="entry name" value="Calcium ATPase, transmembrane domain M"/>
    <property type="match status" value="1"/>
</dbReference>
<dbReference type="SUPFAM" id="SSF56784">
    <property type="entry name" value="HAD-like"/>
    <property type="match status" value="1"/>
</dbReference>
<dbReference type="SUPFAM" id="SSF81660">
    <property type="entry name" value="Metal cation-transporting ATPase, ATP-binding domain N"/>
    <property type="match status" value="1"/>
</dbReference>
<dbReference type="PROSITE" id="PS00154">
    <property type="entry name" value="ATPASE_E1_E2"/>
    <property type="match status" value="1"/>
</dbReference>
<sequence>MGDKKDDKDSPKKNKGKERRDLDDLKKEVAMTEHKMSVEEVCRKYNTDCVQGLTHSKAQEILARDGPNALTPPPTTPEWVKFCRQLFGGFSILLWIGAILCFLAYGIQAGTEDDPSGDNLYLGIVLAAVVIITGCFSYYQEAKSSKIMESFKNMVPQQALVIREGEKMQVNAEEVVVGDLVEIKGGDRVPADLRIISAHGCKVDNSSLTGESEPQTRSPDCTHDNPLETRNITFFSTNCVEGTARGVVVATGDRTVMGRIATLASGLEVGKTPIAIEIEHFIQLITGVAVFLGVSFFILSLILGYTWLEAVIFLIGIIVANVPEGLLATVTVCLTLTAKRMARKNCLVKNLEAVETLGSTSTICSDKTGTLTQNRMTVAHMWFDNQIHEADTTEDQSGTSFDKSSHTWVALSHIAGLCNRAVFKGGQDNIPVLKRDVAGDASESALLKCIELSSGSVKLMRERNKKVAEIPFNSTNKYQLSIHETEDPNDNRYLLVMKGAPERILDRCSTILLQGKEQPLDEEMKEAFQNAYLELGGLGERVLGFCHYYLPEEQFPKGFAFDCDDVNFTTDNLCFVGLMSMIDPPRAAVPDAVGKCRSAGIKVIMVTGDHPITAKAIAKGVGIISEGNETVEDIAARLNIPVSQVNPRDAKACVIHGTDLKDFTSEQIDEILQNHTEIVFARTSPQQKLIIVEGCQRQGAIVAVTGDGVNDSPALKKADIGVAMGIAGSDVSKQAADMILLDDNFASIVTGVEEGRLIFDNLKKSIAYTLTSNIPEITPFLLFIMANIPLPLGTITILCIDLGTDMVPAISLAYEAAESDIMKRQPRNPRTDKLVNERLISMAYGQIGMIQALGGFFSYFVILAENGFLPGNLVGIRLNWDDRTVNDLEDSYGQQWTYEQRKVVEFTCHTAFFVSIVVVQWADLIICKTRRNSVFQQGMKNKILIFGLFEETALAAFLSYCPGMDVALRMYPLKPSWWFCAFPYSFLIFVYDEIRKLILRRNPGGWVEKETYY</sequence>
<organism>
    <name type="scientific">Homo sapiens</name>
    <name type="common">Human</name>
    <dbReference type="NCBI Taxonomy" id="9606"/>
    <lineage>
        <taxon>Eukaryota</taxon>
        <taxon>Metazoa</taxon>
        <taxon>Chordata</taxon>
        <taxon>Craniata</taxon>
        <taxon>Vertebrata</taxon>
        <taxon>Euteleostomi</taxon>
        <taxon>Mammalia</taxon>
        <taxon>Eutheria</taxon>
        <taxon>Euarchontoglires</taxon>
        <taxon>Primates</taxon>
        <taxon>Haplorrhini</taxon>
        <taxon>Catarrhini</taxon>
        <taxon>Hominidae</taxon>
        <taxon>Homo</taxon>
    </lineage>
</organism>
<comment type="function">
    <text evidence="15">This is the catalytic component of the active enzyme, which catalyzes the hydrolysis of ATP coupled with the exchange of sodium and potassium ions across the plasma membrane. This action creates the electrochemical gradient of sodium and potassium ions, providing the energy for active transport of various nutrients.</text>
</comment>
<comment type="catalytic activity">
    <reaction>
        <text>K(+)(out) + Na(+)(in) + ATP + H2O = K(+)(in) + Na(+)(out) + ADP + phosphate + H(+)</text>
        <dbReference type="Rhea" id="RHEA:18353"/>
        <dbReference type="ChEBI" id="CHEBI:15377"/>
        <dbReference type="ChEBI" id="CHEBI:15378"/>
        <dbReference type="ChEBI" id="CHEBI:29101"/>
        <dbReference type="ChEBI" id="CHEBI:29103"/>
        <dbReference type="ChEBI" id="CHEBI:30616"/>
        <dbReference type="ChEBI" id="CHEBI:43474"/>
        <dbReference type="ChEBI" id="CHEBI:456216"/>
        <dbReference type="EC" id="7.2.2.13"/>
    </reaction>
</comment>
<comment type="subunit">
    <text evidence="2">The sodium/potassium-transporting ATPase is composed of a catalytic alpha subunit, an auxiliary non-catalytic beta subunit and an additional regulatory subunit. Interacts with regulatory subunit FXYD1.</text>
</comment>
<comment type="interaction">
    <interactant intactId="EBI-948169">
        <id>P13637</id>
    </interactant>
    <interactant intactId="EBI-10254793">
        <id>Q6XD76</id>
        <label>ASCL4</label>
    </interactant>
    <organismsDiffer>false</organismsDiffer>
    <experiments>3</experiments>
</comment>
<comment type="interaction">
    <interactant intactId="EBI-948169">
        <id>P13637</id>
    </interactant>
    <interactant intactId="EBI-7105206">
        <id>Q9UMX3</id>
        <label>BOK</label>
    </interactant>
    <organismsDiffer>false</organismsDiffer>
    <experiments>3</experiments>
</comment>
<comment type="interaction">
    <interactant intactId="EBI-948169">
        <id>P13637</id>
    </interactant>
    <interactant intactId="EBI-1383687">
        <id>Q9UQM7</id>
        <label>CAMK2A</label>
    </interactant>
    <organismsDiffer>false</organismsDiffer>
    <experiments>3</experiments>
</comment>
<comment type="interaction">
    <interactant intactId="EBI-948169">
        <id>P13637</id>
    </interactant>
    <interactant intactId="EBI-10213520">
        <id>Q6NXG1</id>
        <label>ESRP1</label>
    </interactant>
    <organismsDiffer>false</organismsDiffer>
    <experiments>3</experiments>
</comment>
<comment type="interaction">
    <interactant intactId="EBI-948169">
        <id>P13637</id>
    </interactant>
    <interactant intactId="EBI-9089567">
        <id>Q99504</id>
        <label>EYA3</label>
    </interactant>
    <organismsDiffer>false</organismsDiffer>
    <experiments>3</experiments>
</comment>
<comment type="interaction">
    <interactant intactId="EBI-948169">
        <id>P13637</id>
    </interactant>
    <interactant intactId="EBI-6509505">
        <id>Q0VD86</id>
        <label>INCA1</label>
    </interactant>
    <organismsDiffer>false</organismsDiffer>
    <experiments>3</experiments>
</comment>
<comment type="interaction">
    <interactant intactId="EBI-948169">
        <id>P13637</id>
    </interactant>
    <interactant intactId="EBI-25830459">
        <id>Q6ZQX7-4</id>
        <label>LIAT1</label>
    </interactant>
    <organismsDiffer>false</organismsDiffer>
    <experiments>3</experiments>
</comment>
<comment type="interaction">
    <interactant intactId="EBI-948169">
        <id>P13637</id>
    </interactant>
    <interactant intactId="EBI-18212103">
        <id>Q9GZQ6</id>
        <label>NPFFR1</label>
    </interactant>
    <organismsDiffer>false</organismsDiffer>
    <experiments>3</experiments>
</comment>
<comment type="interaction">
    <interactant intactId="EBI-948169">
        <id>P13637</id>
    </interactant>
    <interactant intactId="EBI-10171633">
        <id>Q96PV4</id>
        <label>PNMA5</label>
    </interactant>
    <organismsDiffer>false</organismsDiffer>
    <experiments>3</experiments>
</comment>
<comment type="interaction">
    <interactant intactId="EBI-948169">
        <id>P13637</id>
    </interactant>
    <interactant intactId="EBI-2902468">
        <id>P12757</id>
        <label>SKIL</label>
    </interactant>
    <organismsDiffer>false</organismsDiffer>
    <experiments>3</experiments>
</comment>
<comment type="interaction">
    <interactant intactId="EBI-948169">
        <id>P13637</id>
    </interactant>
    <interactant intactId="EBI-1055655">
        <id>Q08AE8</id>
        <label>SPIRE1</label>
    </interactant>
    <organismsDiffer>false</organismsDiffer>
    <experiments>3</experiments>
</comment>
<comment type="interaction">
    <interactant intactId="EBI-948169">
        <id>P13637</id>
    </interactant>
    <interactant intactId="EBI-11285923">
        <id>Q9H7C4</id>
        <label>SYNC</label>
    </interactant>
    <organismsDiffer>false</organismsDiffer>
    <experiments>3</experiments>
</comment>
<comment type="interaction">
    <interactant intactId="EBI-948169">
        <id>P13637</id>
    </interactant>
    <interactant intactId="EBI-12000326">
        <id>P15923-3</id>
        <label>TCF3</label>
    </interactant>
    <organismsDiffer>false</organismsDiffer>
    <experiments>3</experiments>
</comment>
<comment type="interaction">
    <interactant intactId="EBI-948169">
        <id>P13637</id>
    </interactant>
    <interactant intactId="EBI-396540">
        <id>Q12888</id>
        <label>TP53BP1</label>
    </interactant>
    <organismsDiffer>false</organismsDiffer>
    <experiments>3</experiments>
</comment>
<comment type="interaction">
    <interactant intactId="EBI-948169">
        <id>P13637</id>
    </interactant>
    <interactant intactId="EBI-2107455">
        <id>Q08AM6</id>
        <label>VAC14</label>
    </interactant>
    <organismsDiffer>false</organismsDiffer>
    <experiments>3</experiments>
</comment>
<comment type="interaction">
    <interactant intactId="EBI-948169">
        <id>P13637</id>
    </interactant>
    <interactant intactId="EBI-2859943">
        <id>Q6ZSB9</id>
        <label>ZBTB49</label>
    </interactant>
    <organismsDiffer>false</organismsDiffer>
    <experiments>3</experiments>
</comment>
<comment type="interaction">
    <interactant intactId="EBI-948169">
        <id>P13637</id>
    </interactant>
    <interactant intactId="EBI-717634">
        <id>P17024</id>
        <label>ZNF20</label>
    </interactant>
    <organismsDiffer>false</organismsDiffer>
    <experiments>3</experiments>
</comment>
<comment type="subcellular location">
    <subcellularLocation>
        <location evidence="16">Cell membrane</location>
        <topology evidence="16">Multi-pass membrane protein</topology>
    </subcellularLocation>
</comment>
<comment type="alternative products">
    <event type="alternative splicing"/>
    <isoform>
        <id>P13637-1</id>
        <name>1</name>
        <sequence type="displayed"/>
    </isoform>
    <isoform>
        <id>P13637-2</id>
        <name>2</name>
        <sequence type="described" ref="VSP_046956"/>
    </isoform>
    <isoform>
        <id>P13637-3</id>
        <name>3</name>
        <sequence type="described" ref="VSP_046957"/>
    </isoform>
</comment>
<comment type="disease" evidence="6 7 8">
    <disease id="DI-00419">
        <name>Dystonia 12</name>
        <acronym>DYT12</acronym>
        <description>An autosomal dominant dystonia-parkinsonism disorder. Dystonia is defined by the presence of sustained involuntary muscle contractions, often leading to abnormal postures. DYT12 patients develop dystonia and parkinsonism between 15 and 45 years of age. The disease is characterized by an unusually rapid evolution of signs and symptoms. The sudden onset of symptoms over hours to a few weeks, often associated with physical or emotional stress, suggests a trigger initiating a nervous system insult resulting in permanent neurologic disability.</description>
        <dbReference type="MIM" id="128235"/>
    </disease>
    <text>The disease is caused by variants affecting the gene represented in this entry.</text>
</comment>
<comment type="disease" evidence="9 10 11 13 14">
    <disease id="DI-03527">
        <name>Alternating hemiplegia of childhood 2</name>
        <acronym>AHC2</acronym>
        <description>A rare syndrome of episodic hemi- or quadriplegia lasting minutes to days. Most cases are accompanied by dystonic posturing, choreoathetoid movements, nystagmus, other ocular motor abnormalities, autonomic disturbances, and progressive cognitive impairment. It is typically distinguished from familial hemiplegic migraine by infantile onset and high prevalence of associated neurological deficits that become increasingly obvious with age.</description>
        <dbReference type="MIM" id="614820"/>
    </disease>
    <text>The disease is caused by variants affecting the gene represented in this entry.</text>
</comment>
<comment type="disease" evidence="12">
    <disease id="DI-04236">
        <name>Cerebellar ataxia, areflexia, pes cavus, optic atrophy, and sensorineural hearing loss</name>
        <acronym>CAPOS</acronym>
        <description>An autosomal dominant neurologic disorder characterized by relapsing and partially remitting, early-onset cerebellar ataxia following a febrile illness. Other features include progressive optic atrophy and sensorineural hearing loss, generalized hypotonia, areflexia and pes cavus without evidence of a peripheral neuropathy on neurophysiological studies.</description>
        <dbReference type="MIM" id="601338"/>
    </disease>
    <text>The disease is caused by variants affecting the gene represented in this entry.</text>
</comment>
<comment type="disease" evidence="15">
    <disease id="DI-06265">
        <name>Developmental and epileptic encephalopathy 99</name>
        <acronym>DEE99</acronym>
        <description>A form of epileptic encephalopathy, a heterogeneous group of early-onset epilepsies characterized by refractory seizures, neurodevelopmental impairment, and poor prognosis. Development is normal prior to seizure onset, after which cognitive and motor delays become apparent. DEE99 is an autosomal dominant form characterized by onset of seizures in early childhood.</description>
        <dbReference type="MIM" id="619606"/>
    </disease>
    <text>The disease is caused by variants affecting the gene represented in this entry.</text>
</comment>
<comment type="similarity">
    <text evidence="18">Belongs to the cation transport ATPase (P-type) (TC 3.A.3) family. Type IIC subfamily.</text>
</comment>
<name>AT1A3_HUMAN</name>
<keyword id="KW-0002">3D-structure</keyword>
<keyword id="KW-0025">Alternative splicing</keyword>
<keyword id="KW-0067">ATP-binding</keyword>
<keyword id="KW-1003">Cell membrane</keyword>
<keyword id="KW-0209">Deafness</keyword>
<keyword id="KW-0225">Disease variant</keyword>
<keyword id="KW-1023">Dystonia</keyword>
<keyword id="KW-0887">Epilepsy</keyword>
<keyword id="KW-0991">Intellectual disability</keyword>
<keyword id="KW-0406">Ion transport</keyword>
<keyword id="KW-0460">Magnesium</keyword>
<keyword id="KW-0472">Membrane</keyword>
<keyword id="KW-0479">Metal-binding</keyword>
<keyword id="KW-0547">Nucleotide-binding</keyword>
<keyword id="KW-0908">Parkinsonism</keyword>
<keyword id="KW-0597">Phosphoprotein</keyword>
<keyword id="KW-0630">Potassium</keyword>
<keyword id="KW-0633">Potassium transport</keyword>
<keyword id="KW-1267">Proteomics identification</keyword>
<keyword id="KW-1185">Reference proteome</keyword>
<keyword id="KW-0915">Sodium</keyword>
<keyword id="KW-0739">Sodium transport</keyword>
<keyword id="KW-0740">Sodium/potassium transport</keyword>
<keyword id="KW-1278">Translocase</keyword>
<keyword id="KW-0812">Transmembrane</keyword>
<keyword id="KW-1133">Transmembrane helix</keyword>
<keyword id="KW-0813">Transport</keyword>
<accession>P13637</accession>
<accession>B7Z2T0</accession>
<accession>B7Z401</accession>
<accession>F5H6J6</accession>
<accession>Q16732</accession>
<accession>Q16735</accession>
<accession>Q969K5</accession>
<feature type="chain" id="PRO_0000046298" description="Sodium/potassium-transporting ATPase subunit alpha-3">
    <location>
        <begin position="1"/>
        <end position="1013"/>
    </location>
</feature>
<feature type="topological domain" description="Cytoplasmic" evidence="4">
    <location>
        <begin position="1"/>
        <end position="77"/>
    </location>
</feature>
<feature type="transmembrane region" description="Helical" evidence="4">
    <location>
        <begin position="78"/>
        <end position="98"/>
    </location>
</feature>
<feature type="topological domain" description="Extracellular" evidence="4">
    <location>
        <begin position="99"/>
        <end position="121"/>
    </location>
</feature>
<feature type="transmembrane region" description="Helical" evidence="4">
    <location>
        <begin position="122"/>
        <end position="142"/>
    </location>
</feature>
<feature type="topological domain" description="Cytoplasmic" evidence="4">
    <location>
        <begin position="143"/>
        <end position="278"/>
    </location>
</feature>
<feature type="transmembrane region" description="Helical" evidence="4">
    <location>
        <begin position="279"/>
        <end position="298"/>
    </location>
</feature>
<feature type="topological domain" description="Extracellular" evidence="4">
    <location>
        <begin position="299"/>
        <end position="310"/>
    </location>
</feature>
<feature type="transmembrane region" description="Helical" evidence="4">
    <location>
        <begin position="311"/>
        <end position="328"/>
    </location>
</feature>
<feature type="topological domain" description="Cytoplasmic" evidence="4">
    <location>
        <begin position="329"/>
        <end position="762"/>
    </location>
</feature>
<feature type="transmembrane region" description="Helical" evidence="4">
    <location>
        <begin position="763"/>
        <end position="782"/>
    </location>
</feature>
<feature type="topological domain" description="Extracellular" evidence="4">
    <location>
        <begin position="783"/>
        <end position="792"/>
    </location>
</feature>
<feature type="transmembrane region" description="Helical" evidence="4">
    <location>
        <begin position="793"/>
        <end position="813"/>
    </location>
</feature>
<feature type="topological domain" description="Cytoplasmic" evidence="4">
    <location>
        <begin position="814"/>
        <end position="833"/>
    </location>
</feature>
<feature type="transmembrane region" description="Helical" evidence="4">
    <location>
        <begin position="834"/>
        <end position="856"/>
    </location>
</feature>
<feature type="topological domain" description="Extracellular" evidence="4">
    <location>
        <begin position="857"/>
        <end position="908"/>
    </location>
</feature>
<feature type="transmembrane region" description="Helical" evidence="4">
    <location>
        <begin position="909"/>
        <end position="928"/>
    </location>
</feature>
<feature type="topological domain" description="Cytoplasmic" evidence="4">
    <location>
        <begin position="929"/>
        <end position="941"/>
    </location>
</feature>
<feature type="transmembrane region" description="Helical" evidence="4">
    <location>
        <begin position="942"/>
        <end position="960"/>
    </location>
</feature>
<feature type="topological domain" description="Extracellular" evidence="4">
    <location>
        <begin position="961"/>
        <end position="975"/>
    </location>
</feature>
<feature type="transmembrane region" description="Helical" evidence="4">
    <location>
        <begin position="976"/>
        <end position="996"/>
    </location>
</feature>
<feature type="topological domain" description="Cytoplasmic" evidence="4">
    <location>
        <begin position="997"/>
        <end position="1013"/>
    </location>
</feature>
<feature type="region of interest" description="Disordered" evidence="5">
    <location>
        <begin position="1"/>
        <end position="24"/>
    </location>
</feature>
<feature type="region of interest" description="Interaction with phosphoinositide-3 kinase" evidence="1">
    <location>
        <begin position="72"/>
        <end position="74"/>
    </location>
</feature>
<feature type="active site" description="4-aspartylphosphate intermediate" evidence="1">
    <location>
        <position position="366"/>
    </location>
</feature>
<feature type="binding site" evidence="1">
    <location>
        <position position="707"/>
    </location>
    <ligand>
        <name>Mg(2+)</name>
        <dbReference type="ChEBI" id="CHEBI:18420"/>
    </ligand>
</feature>
<feature type="binding site" evidence="1">
    <location>
        <position position="711"/>
    </location>
    <ligand>
        <name>Mg(2+)</name>
        <dbReference type="ChEBI" id="CHEBI:18420"/>
    </ligand>
</feature>
<feature type="modified residue" description="Phosphoserine" evidence="2">
    <location>
        <position position="37"/>
    </location>
</feature>
<feature type="modified residue" description="Phosphoserine" evidence="3">
    <location>
        <position position="56"/>
    </location>
</feature>
<feature type="modified residue" description="Phosphoserine" evidence="3">
    <location>
        <position position="218"/>
    </location>
</feature>
<feature type="modified residue" description="Phosphoserine" evidence="3">
    <location>
        <position position="265"/>
    </location>
</feature>
<feature type="modified residue" description="Phosphoserine" evidence="2">
    <location>
        <position position="442"/>
    </location>
</feature>
<feature type="modified residue" description="Phosphotyrosine" evidence="3">
    <location>
        <position position="548"/>
    </location>
</feature>
<feature type="modified residue" description="Phosphoserine; by PKA" evidence="1">
    <location>
        <position position="933"/>
    </location>
</feature>
<feature type="splice variant" id="VSP_046956" description="In isoform 2." evidence="17">
    <original>MG</original>
    <variation>MGGWEEERNRRAT</variation>
    <location>
        <begin position="1"/>
        <end position="2"/>
    </location>
</feature>
<feature type="splice variant" id="VSP_046957" description="In isoform 3." evidence="17">
    <original>MG</original>
    <variation>MGSGGSDSYRIATSQ</variation>
    <location>
        <begin position="1"/>
        <end position="2"/>
    </location>
</feature>
<feature type="sequence variant" id="VAR_068935" description="In AHC2; dbSNP:rs542652468." evidence="9">
    <original>S</original>
    <variation>F</variation>
    <location>
        <position position="137"/>
    </location>
</feature>
<feature type="sequence variant" id="VAR_068936" description="In AHC2; strong decrease in ATPase activity; dbSNP:rs542652468." evidence="9 13">
    <original>S</original>
    <variation>Y</variation>
    <location>
        <position position="137"/>
    </location>
</feature>
<feature type="sequence variant" id="VAR_068937" description="In AHC2; dbSNP:rs606231427." evidence="9">
    <original>Q</original>
    <variation>L</variation>
    <location>
        <position position="140"/>
    </location>
</feature>
<feature type="sequence variant" id="VAR_068938" description="In AHC2; no effect on ATPase activity; dbSNP:rs1396898460." evidence="9 13">
    <original>D</original>
    <variation>N</variation>
    <location>
        <position position="220"/>
    </location>
</feature>
<feature type="sequence variant" id="VAR_068939" description="In AHC2; strong decrease in ATPase activity; dbSNP:rs80356532." evidence="9 10 13">
    <original>I</original>
    <variation>N</variation>
    <location>
        <position position="274"/>
    </location>
</feature>
<feature type="sequence variant" id="VAR_026735" description="In DYT12; dbSNP:rs80356532." evidence="6">
    <original>I</original>
    <variation>T</variation>
    <location>
        <position position="274"/>
    </location>
</feature>
<feature type="sequence variant" id="VAR_026736" description="In DYT12; dbSNP:rs80356533." evidence="6">
    <original>E</original>
    <variation>K</variation>
    <location>
        <position position="277"/>
    </location>
</feature>
<feature type="sequence variant" id="VAR_086446" description="In DEE99; decreased affinity for sodium ions; decreased affinity for potassium ions; dbSNP:rs2145977887." evidence="15">
    <original>L</original>
    <variation>R</variation>
    <location>
        <position position="292"/>
    </location>
</feature>
<feature type="sequence variant" id="VAR_086447" description="In DEE99; decreased affinity for sodium ions; decreased affinity for potassium ions; dbSNP:rs2145977758." evidence="15">
    <original>G</original>
    <variation>V</variation>
    <location>
        <position position="316"/>
    </location>
</feature>
<feature type="sequence variant" id="VAR_078699" description="Found in a patient with tonic-clonic seizures and profound developmental delay with paroxysmal movement disorder; likely pathogenic; dbSNP:rs879255368." evidence="14">
    <original>A</original>
    <variation>T</variation>
    <location>
        <position position="320"/>
    </location>
</feature>
<feature type="sequence variant" id="VAR_070767" description="In AHC2; dbSNP:rs606231428." evidence="10">
    <original>V</original>
    <variation>D</variation>
    <location>
        <position position="322"/>
    </location>
</feature>
<feature type="sequence variant" id="VAR_068940" description="In AHC2; decreased ATPase activity; dbSNP:rs606231430." evidence="9">
    <original>C</original>
    <variation>F</variation>
    <location>
        <position position="333"/>
    </location>
</feature>
<feature type="sequence variant" id="VAR_086448" description="In DEE99; dbSNP:rs2145972497." evidence="15">
    <original>S</original>
    <variation>P</variation>
    <location>
        <position position="361"/>
    </location>
</feature>
<feature type="sequence variant" id="VAR_070768" description="In AHC2; dbSNP:rs606231433." evidence="10">
    <original>L</original>
    <variation>P</variation>
    <location>
        <position position="371"/>
    </location>
</feature>
<feature type="sequence variant" id="VAR_086449" description="In DEE99." evidence="15">
    <original>D</original>
    <variation>Y</variation>
    <location>
        <position position="609"/>
    </location>
</feature>
<feature type="sequence variant" id="VAR_026737" description="In DYT12; dbSNP:rs80356534." evidence="6">
    <original>T</original>
    <variation>M</variation>
    <location>
        <position position="613"/>
    </location>
</feature>
<feature type="sequence variant" id="VAR_070769" description="In AHC2; dbSNP:rs557052809." evidence="10 11">
    <original>G</original>
    <variation>C</variation>
    <location>
        <position position="755"/>
    </location>
</feature>
<feature type="sequence variant" id="VAR_068941" description="In AHC2; dbSNP:rs557052809." evidence="9">
    <original>G</original>
    <variation>S</variation>
    <location>
        <position position="755"/>
    </location>
</feature>
<feature type="sequence variant" id="VAR_026738" description="In DYT12; dbSNP:rs80356535." evidence="6">
    <original>I</original>
    <variation>S</variation>
    <location>
        <position position="758"/>
    </location>
</feature>
<feature type="sequence variant" id="VAR_086450" description="In DEE99." evidence="15">
    <location>
        <position position="764"/>
    </location>
</feature>
<feature type="sequence variant" id="VAR_070770" description="In AHC2; dbSNP:rs534926223." evidence="10">
    <original>S</original>
    <variation>R</variation>
    <location>
        <position position="772"/>
    </location>
</feature>
<feature type="sequence variant" id="VAR_070771" description="In AHC2; dbSNP:rs606231437." evidence="10">
    <original>N</original>
    <variation>I</variation>
    <location>
        <position position="773"/>
    </location>
</feature>
<feature type="sequence variant" id="VAR_068942" description="In AHC2; dbSNP:rs606231437." evidence="9">
    <original>N</original>
    <variation>S</variation>
    <location>
        <position position="773"/>
    </location>
</feature>
<feature type="sequence variant" id="VAR_086451" description="In DEE99." evidence="15">
    <original>P</original>
    <variation>R</variation>
    <location>
        <position position="775"/>
    </location>
</feature>
<feature type="sequence variant" id="VAR_026739" description="In DYT12; dbSNP:rs80356536." evidence="6">
    <original>F</original>
    <variation>L</variation>
    <location>
        <position position="780"/>
    </location>
</feature>
<feature type="sequence variant" id="VAR_068943" description="In AHC2 and DEE99; strong decrease in ATPase activity; dbSNP:rs80356537." evidence="9 10 11 13 15">
    <original>D</original>
    <variation>N</variation>
    <location>
        <position position="801"/>
    </location>
</feature>
<feature type="sequence variant" id="VAR_026740" description="In DYT12; dbSNP:rs80356537." evidence="6">
    <original>D</original>
    <variation>Y</variation>
    <location>
        <position position="801"/>
    </location>
</feature>
<feature type="sequence variant" id="VAR_068944" description="In AHC2; dbSNP:rs549006436." evidence="9">
    <original>M</original>
    <variation>R</variation>
    <location>
        <position position="806"/>
    </location>
</feature>
<feature type="sequence variant" id="VAR_068945" description="In AHC2; dbSNP:rs536681257." evidence="9">
    <original>I</original>
    <variation>S</variation>
    <location>
        <position position="810"/>
    </location>
</feature>
<feature type="sequence variant" id="VAR_068946" description="In AHC2; decreased ATPase activity; dbSNP:rs387907282." evidence="9">
    <original>S</original>
    <variation>P</variation>
    <location>
        <position position="811"/>
    </location>
</feature>
<feature type="sequence variant" id="VAR_068947" description="In AHC2; strong decrease in ATPase activity; dbSNP:rs387907281." evidence="9 10 11 13">
    <original>E</original>
    <variation>K</variation>
    <location>
        <position position="815"/>
    </location>
</feature>
<feature type="sequence variant" id="VAR_070772" description="In CAPOS; dbSNP:rs587777771." evidence="12">
    <original>E</original>
    <variation>K</variation>
    <location>
        <position position="818"/>
    </location>
</feature>
<feature type="sequence variant" id="VAR_086452" description="In DEE99." evidence="15">
    <location>
        <position position="857"/>
    </location>
</feature>
<feature type="sequence variant" id="VAR_086453" description="In DEE99; decreased sodium/potassium-exchanging ATPase activity." evidence="15">
    <original>D</original>
    <variation>Y</variation>
    <location>
        <position position="887"/>
    </location>
</feature>
<feature type="sequence variant" id="VAR_086454" description="In DEE99." evidence="15">
    <original>L</original>
    <variation>P</variation>
    <location>
        <position position="888"/>
    </location>
</feature>
<feature type="sequence variant" id="VAR_086455" description="In DEE99." evidence="15">
    <original>G</original>
    <variation>W</variation>
    <location>
        <position position="893"/>
    </location>
</feature>
<feature type="sequence variant" id="VAR_068948" description="In AHC2; dbSNP:rs606231443." evidence="9">
    <location>
        <position position="919"/>
    </location>
</feature>
<feature type="sequence variant" id="VAR_068949" description="In DYT12; dbSNP:rs267606670." evidence="8">
    <original>D</original>
    <variation>N</variation>
    <location>
        <position position="923"/>
    </location>
</feature>
<feature type="sequence variant" id="VAR_070773" description="In AHC2; dbSNP:rs267606670." evidence="10">
    <original>D</original>
    <variation>Y</variation>
    <location>
        <position position="923"/>
    </location>
</feature>
<feature type="sequence variant" id="VAR_086456" description="In DEE99; dbSNP:rs1555859157." evidence="15">
    <original>L</original>
    <variation>P</variation>
    <location>
        <position position="924"/>
    </location>
</feature>
<feature type="sequence variant" id="VAR_070774" description="In AHC2; dbSNP:rs606231444." evidence="11">
    <original>C</original>
    <variation>Y</variation>
    <location>
        <position position="927"/>
    </location>
</feature>
<feature type="sequence variant" id="VAR_068950" description="In AHC2; strong decrease in ATPase activity; dbSNP:rs398122887." evidence="9 13 14">
    <original>G</original>
    <variation>R</variation>
    <location>
        <position position="947"/>
    </location>
</feature>
<feature type="sequence variant" id="VAR_068951" description="In AHC2; dbSNP:rs606231446." evidence="9">
    <original>A</original>
    <variation>D</variation>
    <location>
        <position position="955"/>
    </location>
</feature>
<feature type="sequence variant" id="VAR_086457" description="In DEE99; decreased sodium/potassium-exchanging ATPase activity." evidence="15">
    <location>
        <position position="972"/>
    </location>
</feature>
<feature type="sequence variant" id="VAR_068952" description="In AHC2; dbSNP:rs606231447." evidence="9">
    <original>D</original>
    <variation>Y</variation>
    <location>
        <position position="992"/>
    </location>
</feature>
<feature type="sequence variant" id="VAR_068953" description="In DYT12; there is a drastic 40- to 50-fold reduction in Na(+) affinity in the mutant protein." evidence="7">
    <original>Y</original>
    <variation>YY</variation>
    <location>
        <position position="1013"/>
    </location>
</feature>
<feature type="sequence conflict" description="In Ref. 2; CAA31390." evidence="18" ref="2">
    <original>MG</original>
    <variation>MEIH</variation>
    <location>
        <begin position="1"/>
        <end position="2"/>
    </location>
</feature>
<feature type="sequence conflict" description="In Ref. 3; BAH12387." evidence="18" ref="3">
    <original>S</original>
    <variation>R</variation>
    <location>
        <position position="144"/>
    </location>
</feature>
<feature type="sequence conflict" description="In Ref. 1; AAA51798, 2; CAA31390, 6; AAA52285 and 8; AAA58380." evidence="18" ref="1 2 6 8">
    <original>L</original>
    <variation>V</variation>
    <location>
        <position position="336"/>
    </location>
</feature>
<feature type="sequence conflict" description="In Ref. 6; AAA52285." evidence="18" ref="6">
    <original>H</original>
    <variation>T</variation>
    <location>
        <position position="380"/>
    </location>
</feature>
<feature type="sequence conflict" description="In Ref. 8; AAA58380." evidence="18" ref="8">
    <original>A</original>
    <variation>P</variation>
    <location>
        <position position="421"/>
    </location>
</feature>
<feature type="sequence conflict" description="In Ref. 2; CAA31390." evidence="18" ref="2">
    <original>I</original>
    <variation>M</variation>
    <location>
        <position position="430"/>
    </location>
</feature>
<feature type="sequence conflict" description="In Ref. 1; AAA51798, 2; CAA31390 and 6; AAA52286." evidence="18" ref="1 2 6">
    <original>FPK</original>
    <variation>YPQ</variation>
    <location>
        <begin position="555"/>
        <end position="557"/>
    </location>
</feature>
<feature type="sequence conflict" description="In Ref. 1; AAA51798." evidence="18" ref="1">
    <original>G</original>
    <variation>P</variation>
    <location>
        <position position="577"/>
    </location>
</feature>
<feature type="sequence conflict" description="In Ref. 1; AAA51798, 2; CAA31390 and 6; AAA52286." evidence="18" ref="1 2 6">
    <original>D</original>
    <variation>G</variation>
    <location>
        <position position="583"/>
    </location>
</feature>
<feature type="sequence conflict" description="In Ref. 6; AAA52286." evidence="18" ref="6">
    <original>V</original>
    <variation>A</variation>
    <location>
        <position position="919"/>
    </location>
</feature>
<feature type="sequence conflict" description="In Ref. 6; AAA52286." evidence="18" ref="6">
    <original>L</original>
    <variation>M</variation>
    <location>
        <position position="944"/>
    </location>
</feature>
<feature type="sequence conflict" description="In Ref. 2; CAA31390." evidence="18" ref="2">
    <original>F</original>
    <variation>S</variation>
    <location>
        <position position="982"/>
    </location>
</feature>
<feature type="sequence conflict" description="In Ref. 1; AAA51798." evidence="18" ref="1">
    <original>W</original>
    <variation>S</variation>
    <location>
        <position position="1006"/>
    </location>
</feature>
<feature type="strand" evidence="19">
    <location>
        <begin position="34"/>
        <end position="36"/>
    </location>
</feature>
<feature type="helix" evidence="19">
    <location>
        <begin position="38"/>
        <end position="42"/>
    </location>
</feature>
<feature type="helix" evidence="19">
    <location>
        <begin position="43"/>
        <end position="45"/>
    </location>
</feature>
<feature type="turn" evidence="19">
    <location>
        <begin position="49"/>
        <end position="51"/>
    </location>
</feature>
<feature type="helix" evidence="19">
    <location>
        <begin position="57"/>
        <end position="65"/>
    </location>
</feature>
<feature type="helix" evidence="19">
    <location>
        <begin position="80"/>
        <end position="86"/>
    </location>
</feature>
<feature type="helix" evidence="19">
    <location>
        <begin position="89"/>
        <end position="91"/>
    </location>
</feature>
<feature type="helix" evidence="19">
    <location>
        <begin position="92"/>
        <end position="106"/>
    </location>
</feature>
<feature type="helix" evidence="19">
    <location>
        <begin position="120"/>
        <end position="139"/>
    </location>
</feature>
<feature type="helix" evidence="19">
    <location>
        <begin position="142"/>
        <end position="148"/>
    </location>
</feature>
<feature type="helix" evidence="19">
    <location>
        <begin position="149"/>
        <end position="152"/>
    </location>
</feature>
<feature type="strand" evidence="19">
    <location>
        <begin position="158"/>
        <end position="162"/>
    </location>
</feature>
<feature type="strand" evidence="19">
    <location>
        <begin position="167"/>
        <end position="171"/>
    </location>
</feature>
<feature type="helix" evidence="20">
    <location>
        <begin position="172"/>
        <end position="174"/>
    </location>
</feature>
<feature type="strand" evidence="19">
    <location>
        <begin position="177"/>
        <end position="184"/>
    </location>
</feature>
<feature type="strand" evidence="19">
    <location>
        <begin position="190"/>
        <end position="198"/>
    </location>
</feature>
<feature type="strand" evidence="19">
    <location>
        <begin position="200"/>
        <end position="204"/>
    </location>
</feature>
<feature type="strand" evidence="19">
    <location>
        <begin position="207"/>
        <end position="209"/>
    </location>
</feature>
<feature type="strand" evidence="19">
    <location>
        <begin position="215"/>
        <end position="217"/>
    </location>
</feature>
<feature type="helix" evidence="19">
    <location>
        <begin position="226"/>
        <end position="228"/>
    </location>
</feature>
<feature type="strand" evidence="19">
    <location>
        <begin position="230"/>
        <end position="233"/>
    </location>
</feature>
<feature type="strand" evidence="19">
    <location>
        <begin position="238"/>
        <end position="250"/>
    </location>
</feature>
<feature type="strand" evidence="19">
    <location>
        <begin position="254"/>
        <end position="256"/>
    </location>
</feature>
<feature type="helix" evidence="19">
    <location>
        <begin position="273"/>
        <end position="303"/>
    </location>
</feature>
<feature type="turn" evidence="19">
    <location>
        <begin position="306"/>
        <end position="308"/>
    </location>
</feature>
<feature type="helix" evidence="19">
    <location>
        <begin position="309"/>
        <end position="321"/>
    </location>
</feature>
<feature type="helix" evidence="19">
    <location>
        <begin position="326"/>
        <end position="343"/>
    </location>
</feature>
<feature type="strand" evidence="19">
    <location>
        <begin position="347"/>
        <end position="351"/>
    </location>
</feature>
<feature type="helix" evidence="19">
    <location>
        <begin position="352"/>
        <end position="355"/>
    </location>
</feature>
<feature type="strand" evidence="19">
    <location>
        <begin position="356"/>
        <end position="359"/>
    </location>
</feature>
<feature type="strand" evidence="19">
    <location>
        <begin position="362"/>
        <end position="366"/>
    </location>
</feature>
<feature type="helix" evidence="19">
    <location>
        <begin position="367"/>
        <end position="371"/>
    </location>
</feature>
<feature type="strand" evidence="19">
    <location>
        <begin position="377"/>
        <end position="383"/>
    </location>
</feature>
<feature type="strand" evidence="19">
    <location>
        <begin position="386"/>
        <end position="389"/>
    </location>
</feature>
<feature type="strand" evidence="20">
    <location>
        <begin position="403"/>
        <end position="405"/>
    </location>
</feature>
<feature type="helix" evidence="19">
    <location>
        <begin position="406"/>
        <end position="415"/>
    </location>
</feature>
<feature type="strand" evidence="20">
    <location>
        <begin position="416"/>
        <end position="418"/>
    </location>
</feature>
<feature type="strand" evidence="19">
    <location>
        <begin position="428"/>
        <end position="430"/>
    </location>
</feature>
<feature type="turn" evidence="19">
    <location>
        <begin position="432"/>
        <end position="434"/>
    </location>
</feature>
<feature type="helix" evidence="19">
    <location>
        <begin position="441"/>
        <end position="451"/>
    </location>
</feature>
<feature type="helix" evidence="19">
    <location>
        <begin position="457"/>
        <end position="463"/>
    </location>
</feature>
<feature type="strand" evidence="20">
    <location>
        <begin position="466"/>
        <end position="470"/>
    </location>
</feature>
<feature type="turn" evidence="19">
    <location>
        <begin position="474"/>
        <end position="476"/>
    </location>
</feature>
<feature type="strand" evidence="19">
    <location>
        <begin position="482"/>
        <end position="484"/>
    </location>
</feature>
<feature type="strand" evidence="19">
    <location>
        <begin position="488"/>
        <end position="490"/>
    </location>
</feature>
<feature type="strand" evidence="19">
    <location>
        <begin position="493"/>
        <end position="495"/>
    </location>
</feature>
<feature type="helix" evidence="19">
    <location>
        <begin position="501"/>
        <end position="507"/>
    </location>
</feature>
<feature type="strand" evidence="19">
    <location>
        <begin position="508"/>
        <end position="513"/>
    </location>
</feature>
<feature type="strand" evidence="19">
    <location>
        <begin position="516"/>
        <end position="519"/>
    </location>
</feature>
<feature type="helix" evidence="19">
    <location>
        <begin position="522"/>
        <end position="536"/>
    </location>
</feature>
<feature type="turn" evidence="19">
    <location>
        <begin position="537"/>
        <end position="539"/>
    </location>
</feature>
<feature type="strand" evidence="19">
    <location>
        <begin position="540"/>
        <end position="545"/>
    </location>
</feature>
<feature type="strand" evidence="20">
    <location>
        <begin position="548"/>
        <end position="550"/>
    </location>
</feature>
<feature type="turn" evidence="19">
    <location>
        <begin position="552"/>
        <end position="554"/>
    </location>
</feature>
<feature type="strand" evidence="19">
    <location>
        <begin position="563"/>
        <end position="565"/>
    </location>
</feature>
<feature type="strand" evidence="19">
    <location>
        <begin position="573"/>
        <end position="575"/>
    </location>
</feature>
<feature type="strand" evidence="19">
    <location>
        <begin position="577"/>
        <end position="582"/>
    </location>
</feature>
<feature type="helix" evidence="19">
    <location>
        <begin position="589"/>
        <end position="598"/>
    </location>
</feature>
<feature type="strand" evidence="19">
    <location>
        <begin position="602"/>
        <end position="606"/>
    </location>
</feature>
<feature type="helix" evidence="19">
    <location>
        <begin position="611"/>
        <end position="621"/>
    </location>
</feature>
<feature type="helix" evidence="19">
    <location>
        <begin position="631"/>
        <end position="638"/>
    </location>
</feature>
<feature type="helix" evidence="19">
    <location>
        <begin position="642"/>
        <end position="644"/>
    </location>
</feature>
<feature type="helix" evidence="20">
    <location>
        <begin position="647"/>
        <end position="649"/>
    </location>
</feature>
<feature type="strand" evidence="19">
    <location>
        <begin position="652"/>
        <end position="656"/>
    </location>
</feature>
<feature type="helix" evidence="19">
    <location>
        <begin position="657"/>
        <end position="660"/>
    </location>
</feature>
<feature type="helix" evidence="19">
    <location>
        <begin position="665"/>
        <end position="674"/>
    </location>
</feature>
<feature type="strand" evidence="19">
    <location>
        <begin position="676"/>
        <end position="682"/>
    </location>
</feature>
<feature type="helix" evidence="19">
    <location>
        <begin position="685"/>
        <end position="695"/>
    </location>
</feature>
<feature type="helix" evidence="19">
    <location>
        <begin position="696"/>
        <end position="698"/>
    </location>
</feature>
<feature type="strand" evidence="19">
    <location>
        <begin position="702"/>
        <end position="705"/>
    </location>
</feature>
<feature type="helix" evidence="19">
    <location>
        <begin position="709"/>
        <end position="711"/>
    </location>
</feature>
<feature type="helix" evidence="19">
    <location>
        <begin position="712"/>
        <end position="717"/>
    </location>
</feature>
<feature type="strand" evidence="19">
    <location>
        <begin position="718"/>
        <end position="724"/>
    </location>
</feature>
<feature type="turn" evidence="19">
    <location>
        <begin position="725"/>
        <end position="727"/>
    </location>
</feature>
<feature type="helix" evidence="19">
    <location>
        <begin position="730"/>
        <end position="735"/>
    </location>
</feature>
<feature type="strand" evidence="19">
    <location>
        <begin position="736"/>
        <end position="743"/>
    </location>
</feature>
<feature type="helix" evidence="19">
    <location>
        <begin position="746"/>
        <end position="771"/>
    </location>
</feature>
<feature type="helix" evidence="19">
    <location>
        <begin position="774"/>
        <end position="785"/>
    </location>
</feature>
<feature type="helix" evidence="19">
    <location>
        <begin position="794"/>
        <end position="801"/>
    </location>
</feature>
<feature type="turn" evidence="19">
    <location>
        <begin position="802"/>
        <end position="806"/>
    </location>
</feature>
<feature type="helix" evidence="19">
    <location>
        <begin position="808"/>
        <end position="814"/>
    </location>
</feature>
<feature type="turn" evidence="19">
    <location>
        <begin position="819"/>
        <end position="822"/>
    </location>
</feature>
<feature type="turn" evidence="19">
    <location>
        <begin position="829"/>
        <end position="831"/>
    </location>
</feature>
<feature type="helix" evidence="19">
    <location>
        <begin position="837"/>
        <end position="843"/>
    </location>
</feature>
<feature type="turn" evidence="19">
    <location>
        <begin position="844"/>
        <end position="846"/>
    </location>
</feature>
<feature type="helix" evidence="19">
    <location>
        <begin position="847"/>
        <end position="865"/>
    </location>
</feature>
<feature type="helix" evidence="19">
    <location>
        <begin position="870"/>
        <end position="872"/>
    </location>
</feature>
<feature type="turn" evidence="19">
    <location>
        <begin position="874"/>
        <end position="876"/>
    </location>
</feature>
<feature type="helix" evidence="19">
    <location>
        <begin position="877"/>
        <end position="880"/>
    </location>
</feature>
<feature type="helix" evidence="19">
    <location>
        <begin position="898"/>
        <end position="926"/>
    </location>
</feature>
<feature type="strand" evidence="19">
    <location>
        <begin position="930"/>
        <end position="932"/>
    </location>
</feature>
<feature type="helix" evidence="19">
    <location>
        <begin position="934"/>
        <end position="936"/>
    </location>
</feature>
<feature type="helix" evidence="19">
    <location>
        <begin position="942"/>
        <end position="958"/>
    </location>
</feature>
<feature type="helix" evidence="19">
    <location>
        <begin position="964"/>
        <end position="967"/>
    </location>
</feature>
<feature type="helix" evidence="19">
    <location>
        <begin position="975"/>
        <end position="979"/>
    </location>
</feature>
<feature type="helix" evidence="19">
    <location>
        <begin position="982"/>
        <end position="1001"/>
    </location>
</feature>
<feature type="helix" evidence="19">
    <location>
        <begin position="1006"/>
        <end position="1010"/>
    </location>
</feature>
<gene>
    <name type="primary">ATP1A3</name>
</gene>